<sequence>MSAEGYQYRALYDYKKEREEDIDLHLGDILTVNKGSLVALGFSDGQEARPEEIGWLNGYNETTGERGDFPGTYVEYIGRKKISPPTPKPRPPRPLPVAPGSSKTEADVEQQALTLPDLAEQFAPPDIAPPLLIKLVEAIEKKGLECSTLYRTQSSSNLAELRQLLDCDTPSVDLEMIDVHVLADAFKRYLLDLPNPVIPAAVYSEMISLAPEVQSSEEYIQLLKKLIRSPSIPHQYWLTLQYLLKHFFKLSQTSSKNLLNARVLSEIFSPMLFRFSAASSDNTENLIKVIEILISTEWNERQPAPALPPKPPKPTTVANNGMNNNMSLQDAEWYWGDISREEVNEKLRDTADGTFLVRDASTKMHGDYTLTLRKGGNNKLIKIFHRDGKYGFSDPLTFSSVVELINHYRNESLAQYNPKLDVKLLYPVSKYQQDQVVKEDNIEAVGKKLHEYNTQFQEKSREYDRLYEEYTRTSQEIQMKRTAIEAFNETIKIFEEQCQTQERYSKEYIEKFKREGNEKEIQRIMHNYDKLKSRISEIIDSRRRLEEDLKKQAAEYREIDKRMNSIKPDLIQLRKTRDQYLMWLTQKGVRQKKLNEWLGNENTEDQYSLVEDDEDLPHHDEKTWNVGSSNRNKAENLLRGKRDGTFLVRESSKQGCYACSVVVDGEVKHCVINKTATGYGFAEPYNLYSSLKELVLHYQHTSLVQHNDSLNVTLAYPVYAQQRR</sequence>
<evidence type="ECO:0000250" key="1"/>
<evidence type="ECO:0000250" key="2">
    <source>
        <dbReference type="UniProtKB" id="P23727"/>
    </source>
</evidence>
<evidence type="ECO:0000250" key="3">
    <source>
        <dbReference type="UniProtKB" id="P26450"/>
    </source>
</evidence>
<evidence type="ECO:0000250" key="4">
    <source>
        <dbReference type="UniProtKB" id="Q63787"/>
    </source>
</evidence>
<evidence type="ECO:0000255" key="5">
    <source>
        <dbReference type="PROSITE-ProRule" id="PRU00172"/>
    </source>
</evidence>
<evidence type="ECO:0000255" key="6">
    <source>
        <dbReference type="PROSITE-ProRule" id="PRU00191"/>
    </source>
</evidence>
<evidence type="ECO:0000255" key="7">
    <source>
        <dbReference type="PROSITE-ProRule" id="PRU00192"/>
    </source>
</evidence>
<evidence type="ECO:0000256" key="8">
    <source>
        <dbReference type="SAM" id="MobiDB-lite"/>
    </source>
</evidence>
<evidence type="ECO:0000269" key="9">
    <source>
    </source>
</evidence>
<evidence type="ECO:0000269" key="10">
    <source>
    </source>
</evidence>
<evidence type="ECO:0000269" key="11">
    <source>
    </source>
</evidence>
<evidence type="ECO:0000269" key="12">
    <source>
    </source>
</evidence>
<evidence type="ECO:0000269" key="13">
    <source>
    </source>
</evidence>
<evidence type="ECO:0000269" key="14">
    <source>
    </source>
</evidence>
<evidence type="ECO:0000269" key="15">
    <source>
    </source>
</evidence>
<evidence type="ECO:0000269" key="16">
    <source>
    </source>
</evidence>
<evidence type="ECO:0000269" key="17">
    <source>
    </source>
</evidence>
<evidence type="ECO:0000269" key="18">
    <source>
    </source>
</evidence>
<evidence type="ECO:0000269" key="19">
    <source>
    </source>
</evidence>
<evidence type="ECO:0000269" key="20">
    <source>
    </source>
</evidence>
<evidence type="ECO:0000269" key="21">
    <source>
    </source>
</evidence>
<evidence type="ECO:0000269" key="22">
    <source>
    </source>
</evidence>
<evidence type="ECO:0000269" key="23">
    <source>
    </source>
</evidence>
<evidence type="ECO:0000269" key="24">
    <source>
    </source>
</evidence>
<evidence type="ECO:0000269" key="25">
    <source>
    </source>
</evidence>
<evidence type="ECO:0000269" key="26">
    <source>
    </source>
</evidence>
<evidence type="ECO:0000269" key="27">
    <source>
    </source>
</evidence>
<evidence type="ECO:0000269" key="28">
    <source>
    </source>
</evidence>
<evidence type="ECO:0000269" key="29">
    <source>
    </source>
</evidence>
<evidence type="ECO:0000269" key="30">
    <source>
    </source>
</evidence>
<evidence type="ECO:0000269" key="31">
    <source>
    </source>
</evidence>
<evidence type="ECO:0000269" key="32">
    <source>
    </source>
</evidence>
<evidence type="ECO:0000269" key="33">
    <source>
    </source>
</evidence>
<evidence type="ECO:0000269" key="34">
    <source>
    </source>
</evidence>
<evidence type="ECO:0000269" key="35">
    <source>
    </source>
</evidence>
<evidence type="ECO:0000269" key="36">
    <source>
    </source>
</evidence>
<evidence type="ECO:0000269" key="37">
    <source>
    </source>
</evidence>
<evidence type="ECO:0000269" key="38">
    <source>
    </source>
</evidence>
<evidence type="ECO:0000269" key="39">
    <source>
    </source>
</evidence>
<evidence type="ECO:0000269" key="40">
    <source>
    </source>
</evidence>
<evidence type="ECO:0000269" key="41">
    <source>
    </source>
</evidence>
<evidence type="ECO:0000269" key="42">
    <source>
    </source>
</evidence>
<evidence type="ECO:0000269" key="43">
    <source>
    </source>
</evidence>
<evidence type="ECO:0000269" key="44">
    <source>
    </source>
</evidence>
<evidence type="ECO:0000269" key="45">
    <source>
    </source>
</evidence>
<evidence type="ECO:0000269" key="46">
    <source>
    </source>
</evidence>
<evidence type="ECO:0000269" key="47">
    <source>
    </source>
</evidence>
<evidence type="ECO:0000269" key="48">
    <source>
    </source>
</evidence>
<evidence type="ECO:0000269" key="49">
    <source>
    </source>
</evidence>
<evidence type="ECO:0000269" key="50">
    <source>
    </source>
</evidence>
<evidence type="ECO:0000269" key="51">
    <source>
    </source>
</evidence>
<evidence type="ECO:0000269" key="52">
    <source>
    </source>
</evidence>
<evidence type="ECO:0000269" key="53">
    <source>
    </source>
</evidence>
<evidence type="ECO:0000269" key="54">
    <source>
    </source>
</evidence>
<evidence type="ECO:0000269" key="55">
    <source>
    </source>
</evidence>
<evidence type="ECO:0000269" key="56">
    <source>
    </source>
</evidence>
<evidence type="ECO:0000269" key="57">
    <source>
    </source>
</evidence>
<evidence type="ECO:0000269" key="58">
    <source>
    </source>
</evidence>
<evidence type="ECO:0000269" key="59">
    <source>
    </source>
</evidence>
<evidence type="ECO:0000269" key="60">
    <source>
    </source>
</evidence>
<evidence type="ECO:0000269" key="61">
    <source>
    </source>
</evidence>
<evidence type="ECO:0000269" key="62">
    <source>
    </source>
</evidence>
<evidence type="ECO:0000269" key="63">
    <source ref="5"/>
</evidence>
<evidence type="ECO:0000303" key="64">
    <source>
    </source>
</evidence>
<evidence type="ECO:0000303" key="65">
    <source>
    </source>
</evidence>
<evidence type="ECO:0000303" key="66">
    <source>
    </source>
</evidence>
<evidence type="ECO:0000303" key="67">
    <source ref="3"/>
</evidence>
<evidence type="ECO:0000303" key="68">
    <source ref="5"/>
</evidence>
<evidence type="ECO:0000305" key="69"/>
<evidence type="ECO:0007744" key="70">
    <source>
    </source>
</evidence>
<evidence type="ECO:0007744" key="71">
    <source>
    </source>
</evidence>
<evidence type="ECO:0007744" key="72">
    <source>
    </source>
</evidence>
<evidence type="ECO:0007829" key="73">
    <source>
        <dbReference type="PDB" id="1AZG"/>
    </source>
</evidence>
<evidence type="ECO:0007829" key="74">
    <source>
        <dbReference type="PDB" id="1PBW"/>
    </source>
</evidence>
<evidence type="ECO:0007829" key="75">
    <source>
        <dbReference type="PDB" id="1PIC"/>
    </source>
</evidence>
<evidence type="ECO:0007829" key="76">
    <source>
        <dbReference type="PDB" id="2IUG"/>
    </source>
</evidence>
<evidence type="ECO:0007829" key="77">
    <source>
        <dbReference type="PDB" id="3I5R"/>
    </source>
</evidence>
<evidence type="ECO:0007829" key="78">
    <source>
        <dbReference type="PDB" id="4JPS"/>
    </source>
</evidence>
<evidence type="ECO:0007829" key="79">
    <source>
        <dbReference type="PDB" id="4L23"/>
    </source>
</evidence>
<evidence type="ECO:0007829" key="80">
    <source>
        <dbReference type="PDB" id="4WAF"/>
    </source>
</evidence>
<evidence type="ECO:0007829" key="81">
    <source>
        <dbReference type="PDB" id="4YKN"/>
    </source>
</evidence>
<evidence type="ECO:0007829" key="82">
    <source>
        <dbReference type="PDB" id="5AUL"/>
    </source>
</evidence>
<evidence type="ECO:0007829" key="83">
    <source>
        <dbReference type="PDB" id="5GJI"/>
    </source>
</evidence>
<evidence type="ECO:0007829" key="84">
    <source>
        <dbReference type="PDB" id="6NCT"/>
    </source>
</evidence>
<evidence type="ECO:0007829" key="85">
    <source>
        <dbReference type="PDB" id="6PYR"/>
    </source>
</evidence>
<evidence type="ECO:0007829" key="86">
    <source>
        <dbReference type="PDB" id="7RNS"/>
    </source>
</evidence>
<evidence type="ECO:0007829" key="87">
    <source>
        <dbReference type="PDB" id="8V8V"/>
    </source>
</evidence>
<keyword id="KW-0002">3D-structure</keyword>
<keyword id="KW-0007">Acetylation</keyword>
<keyword id="KW-0025">Alternative splicing</keyword>
<keyword id="KW-0225">Disease variant</keyword>
<keyword id="KW-0242">Dwarfism</keyword>
<keyword id="KW-0343">GTPase activation</keyword>
<keyword id="KW-0945">Host-virus interaction</keyword>
<keyword id="KW-0597">Phosphoprotein</keyword>
<keyword id="KW-0653">Protein transport</keyword>
<keyword id="KW-1267">Proteomics identification</keyword>
<keyword id="KW-1185">Reference proteome</keyword>
<keyword id="KW-0677">Repeat</keyword>
<keyword id="KW-0727">SH2 domain</keyword>
<keyword id="KW-0728">SH3 domain</keyword>
<keyword id="KW-0346">Stress response</keyword>
<keyword id="KW-0813">Transport</keyword>
<keyword id="KW-0832">Ubl conjugation</keyword>
<feature type="initiator methionine" description="Removed" evidence="71">
    <location>
        <position position="1"/>
    </location>
</feature>
<feature type="chain" id="PRO_0000080758" description="Phosphatidylinositol 3-kinase regulatory subunit alpha">
    <location>
        <begin position="2"/>
        <end position="724"/>
    </location>
</feature>
<feature type="domain" description="SH3" evidence="7">
    <location>
        <begin position="3"/>
        <end position="79"/>
    </location>
</feature>
<feature type="domain" description="Rho-GAP" evidence="5">
    <location>
        <begin position="113"/>
        <end position="301"/>
    </location>
</feature>
<feature type="domain" description="SH2 1" evidence="6">
    <location>
        <begin position="333"/>
        <end position="428"/>
    </location>
</feature>
<feature type="domain" description="SH2 2" evidence="6">
    <location>
        <begin position="624"/>
        <end position="718"/>
    </location>
</feature>
<feature type="region of interest" description="Disordered" evidence="8">
    <location>
        <begin position="80"/>
        <end position="108"/>
    </location>
</feature>
<feature type="compositionally biased region" description="Pro residues" evidence="8">
    <location>
        <begin position="84"/>
        <end position="97"/>
    </location>
</feature>
<feature type="site" description="Arginine finger; crucial for GTP hydrolysis by stabilizing the transition state" evidence="5">
    <location>
        <position position="151"/>
    </location>
</feature>
<feature type="modified residue" description="N-acetylserine" evidence="71">
    <location>
        <position position="2"/>
    </location>
</feature>
<feature type="modified residue" description="Phosphoserine" evidence="72">
    <location>
        <position position="154"/>
    </location>
</feature>
<feature type="modified residue" description="Phosphoserine" evidence="72">
    <location>
        <position position="279"/>
    </location>
</feature>
<feature type="modified residue" description="Phosphotyrosine" evidence="3">
    <location>
        <position position="467"/>
    </location>
</feature>
<feature type="modified residue" description="Phosphotyrosine" evidence="70">
    <location>
        <position position="580"/>
    </location>
</feature>
<feature type="modified residue" description="Phosphoserine" evidence="2">
    <location>
        <position position="608"/>
    </location>
</feature>
<feature type="splice variant" id="VSP_045903" description="In isoform 5." evidence="64">
    <location>
        <begin position="1"/>
        <end position="363"/>
    </location>
</feature>
<feature type="splice variant" id="VSP_021841" description="In isoform 3." evidence="67">
    <location>
        <begin position="1"/>
        <end position="300"/>
    </location>
</feature>
<feature type="splice variant" id="VSP_021842" description="In isoform 2." evidence="65 66 68">
    <location>
        <begin position="1"/>
        <end position="270"/>
    </location>
</feature>
<feature type="splice variant" id="VSP_021843" description="In isoform 2." evidence="65 66 68">
    <original>MLFRFSAASSDNTENLIKVIEILISTEWNERQPA</original>
    <variation>MYNTVWNMEDLDLEYAKTDINCGTDLMFYIEMDP</variation>
    <location>
        <begin position="271"/>
        <end position="304"/>
    </location>
</feature>
<feature type="splice variant" id="VSP_021844" description="In isoform 3." evidence="67">
    <original>RQPAPA</original>
    <variation>MHNLQT</variation>
    <location>
        <begin position="301"/>
        <end position="306"/>
    </location>
</feature>
<feature type="splice variant" id="VSP_021845" description="In isoform 4." evidence="66">
    <original>D</original>
    <variation>ENFLSCLPS</variation>
    <location>
        <position position="605"/>
    </location>
</feature>
<feature type="sequence variant" id="VAR_010023" description="Does not affect insulin-stimulated lipid kinase activity; dbSNP:rs3730089." evidence="12 57 63">
    <original>M</original>
    <variation>I</variation>
    <location>
        <position position="326"/>
    </location>
</feature>
<feature type="sequence variant" id="VAR_010024" description="In a patient with severe insulin resistance; lower insulin-stimulated lipid kinase activity compared with wild-type; dbSNP:rs748784250." evidence="12">
    <original>R</original>
    <variation>Q</variation>
    <location>
        <position position="409"/>
    </location>
</feature>
<feature type="sequence variant" id="VAR_029562" description="In dbSNP:rs17852841." evidence="24">
    <original>E</original>
    <variation>K</variation>
    <location>
        <position position="451"/>
    </location>
</feature>
<feature type="sequence variant" id="VAR_070221" description="In SHORTS; there is 70 to 90% reduction in the effect of insulin on AKT1 activation, glycogen synthesis and glucose uptake, indicating severe insulin resistance for both proximal and distal PI3K-dependent signaling; dbSNP:rs397514047." evidence="40">
    <original>E</original>
    <variation>K</variation>
    <location>
        <position position="489"/>
    </location>
</feature>
<feature type="sequence variant" id="VAR_070222" description="In SHORTS; there is 70 to 90% reduction in the effect of insulin on AKT1 activation, glycogen synthesis and glucose uptake, indicating severe insulin resistance for both proximal and distal PI3K-dependent signaling." evidence="40">
    <location>
        <position position="539"/>
    </location>
</feature>
<feature type="sequence variant" id="VAR_070223" description="In SHORTS; impairs interaction between PIK3R1 and IRS1 and reduces AKT1-mediated insulin signaling; dbSNP:rs397515453." evidence="41 42">
    <original>R</original>
    <variation>W</variation>
    <location>
        <position position="649"/>
    </location>
</feature>
<feature type="sequence conflict" description="In Ref. 1; M61906." evidence="69" ref="1">
    <original>D</original>
    <variation>N</variation>
    <location>
        <position position="330"/>
    </location>
</feature>
<feature type="sequence conflict" description="In Ref. 4; BAG52931." evidence="69" ref="4">
    <original>S</original>
    <variation>G</variation>
    <location>
        <position position="460"/>
    </location>
</feature>
<feature type="strand" evidence="77">
    <location>
        <begin position="4"/>
        <end position="10"/>
    </location>
</feature>
<feature type="strand" evidence="77">
    <location>
        <begin position="29"/>
        <end position="33"/>
    </location>
</feature>
<feature type="helix" evidence="77">
    <location>
        <begin position="34"/>
        <end position="40"/>
    </location>
</feature>
<feature type="turn" evidence="77">
    <location>
        <begin position="43"/>
        <end position="45"/>
    </location>
</feature>
<feature type="helix" evidence="77">
    <location>
        <begin position="46"/>
        <end position="48"/>
    </location>
</feature>
<feature type="helix" evidence="77">
    <location>
        <begin position="50"/>
        <end position="53"/>
    </location>
</feature>
<feature type="strand" evidence="77">
    <location>
        <begin position="55"/>
        <end position="60"/>
    </location>
</feature>
<feature type="turn" evidence="77">
    <location>
        <begin position="61"/>
        <end position="64"/>
    </location>
</feature>
<feature type="strand" evidence="77">
    <location>
        <begin position="65"/>
        <end position="70"/>
    </location>
</feature>
<feature type="helix" evidence="77">
    <location>
        <begin position="71"/>
        <end position="73"/>
    </location>
</feature>
<feature type="strand" evidence="77">
    <location>
        <begin position="74"/>
        <end position="81"/>
    </location>
</feature>
<feature type="turn" evidence="73">
    <location>
        <begin position="100"/>
        <end position="102"/>
    </location>
</feature>
<feature type="helix" evidence="74">
    <location>
        <begin position="118"/>
        <end position="121"/>
    </location>
</feature>
<feature type="helix" evidence="74">
    <location>
        <begin position="130"/>
        <end position="143"/>
    </location>
</feature>
<feature type="turn" evidence="74">
    <location>
        <begin position="147"/>
        <end position="150"/>
    </location>
</feature>
<feature type="helix" evidence="74">
    <location>
        <begin position="160"/>
        <end position="164"/>
    </location>
</feature>
<feature type="strand" evidence="74">
    <location>
        <begin position="167"/>
        <end position="170"/>
    </location>
</feature>
<feature type="helix" evidence="74">
    <location>
        <begin position="174"/>
        <end position="176"/>
    </location>
</feature>
<feature type="helix" evidence="74">
    <location>
        <begin position="179"/>
        <end position="191"/>
    </location>
</feature>
<feature type="strand" evidence="74">
    <location>
        <begin position="193"/>
        <end position="195"/>
    </location>
</feature>
<feature type="helix" evidence="74">
    <location>
        <begin position="200"/>
        <end position="209"/>
    </location>
</feature>
<feature type="helix" evidence="74">
    <location>
        <begin position="210"/>
        <end position="212"/>
    </location>
</feature>
<feature type="helix" evidence="74">
    <location>
        <begin position="216"/>
        <end position="227"/>
    </location>
</feature>
<feature type="helix" evidence="74">
    <location>
        <begin position="234"/>
        <end position="252"/>
    </location>
</feature>
<feature type="helix" evidence="74">
    <location>
        <begin position="254"/>
        <end position="257"/>
    </location>
</feature>
<feature type="helix" evidence="74">
    <location>
        <begin position="261"/>
        <end position="273"/>
    </location>
</feature>
<feature type="helix" evidence="74">
    <location>
        <begin position="280"/>
        <end position="295"/>
    </location>
</feature>
<feature type="helix" evidence="79">
    <location>
        <begin position="323"/>
        <end position="325"/>
    </location>
</feature>
<feature type="helix" evidence="83">
    <location>
        <begin position="328"/>
        <end position="330"/>
    </location>
</feature>
<feature type="turn" evidence="84">
    <location>
        <begin position="331"/>
        <end position="333"/>
    </location>
</feature>
<feature type="strand" evidence="80">
    <location>
        <begin position="334"/>
        <end position="337"/>
    </location>
</feature>
<feature type="helix" evidence="83">
    <location>
        <begin position="340"/>
        <end position="347"/>
    </location>
</feature>
<feature type="strand" evidence="83">
    <location>
        <begin position="354"/>
        <end position="359"/>
    </location>
</feature>
<feature type="strand" evidence="87">
    <location>
        <begin position="361"/>
        <end position="363"/>
    </location>
</feature>
<feature type="helix" evidence="86">
    <location>
        <begin position="364"/>
        <end position="366"/>
    </location>
</feature>
<feature type="strand" evidence="83">
    <location>
        <begin position="368"/>
        <end position="374"/>
    </location>
</feature>
<feature type="strand" evidence="83">
    <location>
        <begin position="377"/>
        <end position="386"/>
    </location>
</feature>
<feature type="strand" evidence="83">
    <location>
        <begin position="389"/>
        <end position="395"/>
    </location>
</feature>
<feature type="strand" evidence="83">
    <location>
        <begin position="398"/>
        <end position="400"/>
    </location>
</feature>
<feature type="helix" evidence="83">
    <location>
        <begin position="401"/>
        <end position="409"/>
    </location>
</feature>
<feature type="helix" evidence="83">
    <location>
        <begin position="413"/>
        <end position="415"/>
    </location>
</feature>
<feature type="helix" evidence="83">
    <location>
        <begin position="418"/>
        <end position="420"/>
    </location>
</feature>
<feature type="strand" evidence="81">
    <location>
        <begin position="425"/>
        <end position="427"/>
    </location>
</feature>
<feature type="turn" evidence="76">
    <location>
        <begin position="430"/>
        <end position="432"/>
    </location>
</feature>
<feature type="helix" evidence="80">
    <location>
        <begin position="433"/>
        <end position="436"/>
    </location>
</feature>
<feature type="helix" evidence="78">
    <location>
        <begin position="442"/>
        <end position="515"/>
    </location>
</feature>
<feature type="helix" evidence="78">
    <location>
        <begin position="518"/>
        <end position="587"/>
    </location>
</feature>
<feature type="helix" evidence="85">
    <location>
        <begin position="591"/>
        <end position="597"/>
    </location>
</feature>
<feature type="helix" evidence="82">
    <location>
        <begin position="617"/>
        <end position="619"/>
    </location>
</feature>
<feature type="helix" evidence="82">
    <location>
        <begin position="621"/>
        <end position="623"/>
    </location>
</feature>
<feature type="strand" evidence="75">
    <location>
        <begin position="625"/>
        <end position="629"/>
    </location>
</feature>
<feature type="helix" evidence="82">
    <location>
        <begin position="631"/>
        <end position="638"/>
    </location>
</feature>
<feature type="strand" evidence="82">
    <location>
        <begin position="645"/>
        <end position="650"/>
    </location>
</feature>
<feature type="strand" evidence="75">
    <location>
        <begin position="652"/>
        <end position="655"/>
    </location>
</feature>
<feature type="strand" evidence="82">
    <location>
        <begin position="657"/>
        <end position="663"/>
    </location>
</feature>
<feature type="strand" evidence="82">
    <location>
        <begin position="666"/>
        <end position="675"/>
    </location>
</feature>
<feature type="strand" evidence="82">
    <location>
        <begin position="678"/>
        <end position="682"/>
    </location>
</feature>
<feature type="strand" evidence="82">
    <location>
        <begin position="688"/>
        <end position="690"/>
    </location>
</feature>
<feature type="helix" evidence="82">
    <location>
        <begin position="691"/>
        <end position="698"/>
    </location>
</feature>
<feature type="helix" evidence="82">
    <location>
        <begin position="703"/>
        <end position="705"/>
    </location>
</feature>
<feature type="turn" evidence="75">
    <location>
        <begin position="708"/>
        <end position="710"/>
    </location>
</feature>
<feature type="strand" evidence="75">
    <location>
        <begin position="716"/>
        <end position="719"/>
    </location>
</feature>
<organism>
    <name type="scientific">Homo sapiens</name>
    <name type="common">Human</name>
    <dbReference type="NCBI Taxonomy" id="9606"/>
    <lineage>
        <taxon>Eukaryota</taxon>
        <taxon>Metazoa</taxon>
        <taxon>Chordata</taxon>
        <taxon>Craniata</taxon>
        <taxon>Vertebrata</taxon>
        <taxon>Euteleostomi</taxon>
        <taxon>Mammalia</taxon>
        <taxon>Eutheria</taxon>
        <taxon>Euarchontoglires</taxon>
        <taxon>Primates</taxon>
        <taxon>Haplorrhini</taxon>
        <taxon>Catarrhini</taxon>
        <taxon>Hominidae</taxon>
        <taxon>Homo</taxon>
    </lineage>
</organism>
<accession>P27986</accession>
<accession>B3KT19</accession>
<accession>D3DWA0</accession>
<accession>E7EX19</accession>
<accession>Q15747</accession>
<accession>Q4VBZ7</accession>
<accession>Q53EM6</accession>
<accession>Q8IXA2</accession>
<accession>Q8N1C5</accession>
<gene>
    <name type="primary">PIK3R1</name>
    <name type="synonym">GRB1</name>
</gene>
<dbReference type="EMBL" id="M61906">
    <property type="status" value="NOT_ANNOTATED_CDS"/>
    <property type="molecule type" value="mRNA"/>
</dbReference>
<dbReference type="EMBL" id="U49349">
    <property type="protein sequence ID" value="AAB04140.1"/>
    <property type="molecule type" value="mRNA"/>
</dbReference>
<dbReference type="EMBL" id="AF279367">
    <property type="protein sequence ID" value="AAO15359.1"/>
    <property type="molecule type" value="mRNA"/>
</dbReference>
<dbReference type="EMBL" id="AK094785">
    <property type="protein sequence ID" value="BAG52931.1"/>
    <property type="molecule type" value="mRNA"/>
</dbReference>
<dbReference type="EMBL" id="AK223613">
    <property type="protein sequence ID" value="BAD97333.1"/>
    <property type="molecule type" value="mRNA"/>
</dbReference>
<dbReference type="EMBL" id="AC016564">
    <property type="status" value="NOT_ANNOTATED_CDS"/>
    <property type="molecule type" value="Genomic_DNA"/>
</dbReference>
<dbReference type="EMBL" id="AC104120">
    <property type="status" value="NOT_ANNOTATED_CDS"/>
    <property type="molecule type" value="Genomic_DNA"/>
</dbReference>
<dbReference type="EMBL" id="CH471137">
    <property type="protein sequence ID" value="EAW51312.1"/>
    <property type="molecule type" value="Genomic_DNA"/>
</dbReference>
<dbReference type="EMBL" id="CH471137">
    <property type="protein sequence ID" value="EAW51313.1"/>
    <property type="molecule type" value="Genomic_DNA"/>
</dbReference>
<dbReference type="EMBL" id="BC030815">
    <property type="protein sequence ID" value="AAH30815.1"/>
    <property type="molecule type" value="mRNA"/>
</dbReference>
<dbReference type="EMBL" id="BC094795">
    <property type="protein sequence ID" value="AAH94795.1"/>
    <property type="molecule type" value="mRNA"/>
</dbReference>
<dbReference type="CCDS" id="CCDS3993.1">
    <molecule id="P27986-1"/>
</dbReference>
<dbReference type="CCDS" id="CCDS3994.1">
    <molecule id="P27986-3"/>
</dbReference>
<dbReference type="CCDS" id="CCDS3995.1">
    <molecule id="P27986-2"/>
</dbReference>
<dbReference type="CCDS" id="CCDS56374.1">
    <molecule id="P27986-5"/>
</dbReference>
<dbReference type="PIR" id="A38748">
    <property type="entry name" value="A38748"/>
</dbReference>
<dbReference type="RefSeq" id="NP_001229395.1">
    <molecule id="P27986-5"/>
    <property type="nucleotide sequence ID" value="NM_001242466.2"/>
</dbReference>
<dbReference type="RefSeq" id="NP_852556.2">
    <molecule id="P27986-2"/>
    <property type="nucleotide sequence ID" value="NM_181504.3"/>
</dbReference>
<dbReference type="RefSeq" id="NP_852664.1">
    <molecule id="P27986-1"/>
    <property type="nucleotide sequence ID" value="NM_181523.3"/>
</dbReference>
<dbReference type="RefSeq" id="NP_852665.1">
    <molecule id="P27986-3"/>
    <property type="nucleotide sequence ID" value="NM_181524.2"/>
</dbReference>
<dbReference type="RefSeq" id="XP_005248599.1">
    <molecule id="P27986-1"/>
    <property type="nucleotide sequence ID" value="XM_005248542.4"/>
</dbReference>
<dbReference type="RefSeq" id="XP_016865074.1">
    <molecule id="P27986-1"/>
    <property type="nucleotide sequence ID" value="XM_017009585.3"/>
</dbReference>
<dbReference type="RefSeq" id="XP_047273271.1">
    <molecule id="P27986-1"/>
    <property type="nucleotide sequence ID" value="XM_047417315.1"/>
</dbReference>
<dbReference type="RefSeq" id="XP_054208801.1">
    <molecule id="P27986-1"/>
    <property type="nucleotide sequence ID" value="XM_054352826.1"/>
</dbReference>
<dbReference type="RefSeq" id="XP_054208802.1">
    <molecule id="P27986-1"/>
    <property type="nucleotide sequence ID" value="XM_054352827.1"/>
</dbReference>
<dbReference type="RefSeq" id="XP_054208803.1">
    <molecule id="P27986-1"/>
    <property type="nucleotide sequence ID" value="XM_054352828.1"/>
</dbReference>
<dbReference type="PDB" id="1A0N">
    <property type="method" value="NMR"/>
    <property type="chains" value="A=91-104"/>
</dbReference>
<dbReference type="PDB" id="1AZG">
    <property type="method" value="NMR"/>
    <property type="chains" value="A=91-104"/>
</dbReference>
<dbReference type="PDB" id="1H9O">
    <property type="method" value="X-ray"/>
    <property type="resolution" value="1.79 A"/>
    <property type="chains" value="A=617-724"/>
</dbReference>
<dbReference type="PDB" id="1PBW">
    <property type="method" value="X-ray"/>
    <property type="resolution" value="2.00 A"/>
    <property type="chains" value="A/B=105-319"/>
</dbReference>
<dbReference type="PDB" id="1PHT">
    <property type="method" value="X-ray"/>
    <property type="resolution" value="2.00 A"/>
    <property type="chains" value="A=1-85"/>
</dbReference>
<dbReference type="PDB" id="1PIC">
    <property type="method" value="NMR"/>
    <property type="chains" value="A=617-724"/>
</dbReference>
<dbReference type="PDB" id="1PKS">
    <property type="method" value="NMR"/>
    <property type="chains" value="A=1-79"/>
</dbReference>
<dbReference type="PDB" id="1PKT">
    <property type="method" value="NMR"/>
    <property type="chains" value="A=1-79"/>
</dbReference>
<dbReference type="PDB" id="2IUG">
    <property type="method" value="X-ray"/>
    <property type="resolution" value="1.89 A"/>
    <property type="chains" value="A=321-440"/>
</dbReference>
<dbReference type="PDB" id="2IUH">
    <property type="method" value="X-ray"/>
    <property type="resolution" value="2.00 A"/>
    <property type="chains" value="A=321-440"/>
</dbReference>
<dbReference type="PDB" id="2IUI">
    <property type="method" value="X-ray"/>
    <property type="resolution" value="2.40 A"/>
    <property type="chains" value="A/B=321-440"/>
</dbReference>
<dbReference type="PDB" id="2RD0">
    <property type="method" value="X-ray"/>
    <property type="resolution" value="3.05 A"/>
    <property type="chains" value="B=322-600"/>
</dbReference>
<dbReference type="PDB" id="2V1Y">
    <property type="method" value="X-ray"/>
    <property type="resolution" value="2.40 A"/>
    <property type="chains" value="B=431-600"/>
</dbReference>
<dbReference type="PDB" id="3HHM">
    <property type="method" value="X-ray"/>
    <property type="resolution" value="2.80 A"/>
    <property type="chains" value="B=322-694"/>
</dbReference>
<dbReference type="PDB" id="3HIZ">
    <property type="method" value="X-ray"/>
    <property type="resolution" value="3.30 A"/>
    <property type="chains" value="B=322-694"/>
</dbReference>
<dbReference type="PDB" id="3I5R">
    <property type="method" value="X-ray"/>
    <property type="resolution" value="1.70 A"/>
    <property type="chains" value="A=1-83"/>
</dbReference>
<dbReference type="PDB" id="3I5S">
    <property type="method" value="X-ray"/>
    <property type="resolution" value="3.00 A"/>
    <property type="chains" value="A/B/C/D=1-83"/>
</dbReference>
<dbReference type="PDB" id="4A55">
    <property type="method" value="X-ray"/>
    <property type="resolution" value="3.50 A"/>
    <property type="chains" value="B=322-600"/>
</dbReference>
<dbReference type="PDB" id="4JPS">
    <property type="method" value="X-ray"/>
    <property type="resolution" value="2.20 A"/>
    <property type="chains" value="B=307-593"/>
</dbReference>
<dbReference type="PDB" id="4L1B">
    <property type="method" value="X-ray"/>
    <property type="resolution" value="2.59 A"/>
    <property type="chains" value="B=318-615"/>
</dbReference>
<dbReference type="PDB" id="4L23">
    <property type="method" value="X-ray"/>
    <property type="resolution" value="2.50 A"/>
    <property type="chains" value="B=318-615"/>
</dbReference>
<dbReference type="PDB" id="4L2Y">
    <property type="method" value="X-ray"/>
    <property type="resolution" value="2.80 A"/>
    <property type="chains" value="B=318-615"/>
</dbReference>
<dbReference type="PDB" id="4OVU">
    <property type="method" value="X-ray"/>
    <property type="resolution" value="2.96 A"/>
    <property type="chains" value="B=322-600"/>
</dbReference>
<dbReference type="PDB" id="4OVV">
    <property type="method" value="X-ray"/>
    <property type="resolution" value="3.50 A"/>
    <property type="chains" value="B=322-600"/>
</dbReference>
<dbReference type="PDB" id="4WAF">
    <property type="method" value="X-ray"/>
    <property type="resolution" value="2.39 A"/>
    <property type="chains" value="B=306-617"/>
</dbReference>
<dbReference type="PDB" id="4YKN">
    <property type="method" value="X-ray"/>
    <property type="resolution" value="2.90 A"/>
    <property type="chains" value="A=318-615"/>
</dbReference>
<dbReference type="PDB" id="4ZOP">
    <property type="method" value="X-ray"/>
    <property type="resolution" value="2.62 A"/>
    <property type="chains" value="B=307-590"/>
</dbReference>
<dbReference type="PDB" id="5AUL">
    <property type="method" value="X-ray"/>
    <property type="resolution" value="1.10 A"/>
    <property type="chains" value="A=614-720"/>
</dbReference>
<dbReference type="PDB" id="5FI4">
    <property type="method" value="X-ray"/>
    <property type="resolution" value="2.50 A"/>
    <property type="chains" value="B=306-617"/>
</dbReference>
<dbReference type="PDB" id="5GJI">
    <property type="method" value="X-ray"/>
    <property type="resolution" value="0.90 A"/>
    <property type="chains" value="A=325-430"/>
</dbReference>
<dbReference type="PDB" id="5ITD">
    <property type="method" value="X-ray"/>
    <property type="resolution" value="3.02 A"/>
    <property type="chains" value="B=307-617"/>
</dbReference>
<dbReference type="PDB" id="5M6U">
    <property type="method" value="X-ray"/>
    <property type="resolution" value="2.85 A"/>
    <property type="chains" value="B=1-724"/>
</dbReference>
<dbReference type="PDB" id="5SW8">
    <property type="method" value="X-ray"/>
    <property type="resolution" value="3.30 A"/>
    <property type="chains" value="B=322-600"/>
</dbReference>
<dbReference type="PDB" id="5SWG">
    <property type="method" value="X-ray"/>
    <property type="resolution" value="3.11 A"/>
    <property type="chains" value="B=322-600"/>
</dbReference>
<dbReference type="PDB" id="5SWO">
    <property type="method" value="X-ray"/>
    <property type="resolution" value="3.50 A"/>
    <property type="chains" value="B=322-600"/>
</dbReference>
<dbReference type="PDB" id="5SWP">
    <property type="method" value="X-ray"/>
    <property type="resolution" value="3.41 A"/>
    <property type="chains" value="B=322-600"/>
</dbReference>
<dbReference type="PDB" id="5SWR">
    <property type="method" value="X-ray"/>
    <property type="resolution" value="3.31 A"/>
    <property type="chains" value="B=322-600"/>
</dbReference>
<dbReference type="PDB" id="5SWT">
    <property type="method" value="X-ray"/>
    <property type="resolution" value="3.49 A"/>
    <property type="chains" value="B=322-600"/>
</dbReference>
<dbReference type="PDB" id="5SX8">
    <property type="method" value="X-ray"/>
    <property type="resolution" value="3.47 A"/>
    <property type="chains" value="B=322-600"/>
</dbReference>
<dbReference type="PDB" id="5SX9">
    <property type="method" value="X-ray"/>
    <property type="resolution" value="3.52 A"/>
    <property type="chains" value="B=322-600"/>
</dbReference>
<dbReference type="PDB" id="5SXA">
    <property type="method" value="X-ray"/>
    <property type="resolution" value="3.35 A"/>
    <property type="chains" value="B=322-600"/>
</dbReference>
<dbReference type="PDB" id="5SXB">
    <property type="method" value="X-ray"/>
    <property type="resolution" value="3.30 A"/>
    <property type="chains" value="B=322-600"/>
</dbReference>
<dbReference type="PDB" id="5SXC">
    <property type="method" value="X-ray"/>
    <property type="resolution" value="3.55 A"/>
    <property type="chains" value="B=322-600"/>
</dbReference>
<dbReference type="PDB" id="5SXD">
    <property type="method" value="X-ray"/>
    <property type="resolution" value="3.50 A"/>
    <property type="chains" value="B=322-600"/>
</dbReference>
<dbReference type="PDB" id="5SXE">
    <property type="method" value="X-ray"/>
    <property type="resolution" value="3.51 A"/>
    <property type="chains" value="B=322-600"/>
</dbReference>
<dbReference type="PDB" id="5SXF">
    <property type="method" value="X-ray"/>
    <property type="resolution" value="3.46 A"/>
    <property type="chains" value="B=322-600"/>
</dbReference>
<dbReference type="PDB" id="5SXI">
    <property type="method" value="X-ray"/>
    <property type="resolution" value="3.40 A"/>
    <property type="chains" value="B=322-600"/>
</dbReference>
<dbReference type="PDB" id="5SXJ">
    <property type="method" value="X-ray"/>
    <property type="resolution" value="3.42 A"/>
    <property type="chains" value="B=322-600"/>
</dbReference>
<dbReference type="PDB" id="5SXK">
    <property type="method" value="X-ray"/>
    <property type="resolution" value="3.55 A"/>
    <property type="chains" value="B=322-600"/>
</dbReference>
<dbReference type="PDB" id="5UBT">
    <property type="method" value="X-ray"/>
    <property type="resolution" value="2.83 A"/>
    <property type="chains" value="B=432-599"/>
</dbReference>
<dbReference type="PDB" id="5UK8">
    <property type="method" value="X-ray"/>
    <property type="resolution" value="2.50 A"/>
    <property type="chains" value="B=306-593"/>
</dbReference>
<dbReference type="PDB" id="5UKJ">
    <property type="method" value="X-ray"/>
    <property type="resolution" value="2.80 A"/>
    <property type="chains" value="B=306-593"/>
</dbReference>
<dbReference type="PDB" id="5UL1">
    <property type="method" value="X-ray"/>
    <property type="resolution" value="3.00 A"/>
    <property type="chains" value="B=306-593"/>
</dbReference>
<dbReference type="PDB" id="5VLR">
    <property type="method" value="X-ray"/>
    <property type="resolution" value="2.80 A"/>
    <property type="chains" value="B=431-600"/>
</dbReference>
<dbReference type="PDB" id="5XGH">
    <property type="method" value="X-ray"/>
    <property type="resolution" value="2.97 A"/>
    <property type="chains" value="B=322-598"/>
</dbReference>
<dbReference type="PDB" id="5XGI">
    <property type="method" value="X-ray"/>
    <property type="resolution" value="2.56 A"/>
    <property type="chains" value="B=322-598"/>
</dbReference>
<dbReference type="PDB" id="5XGJ">
    <property type="method" value="X-ray"/>
    <property type="resolution" value="2.97 A"/>
    <property type="chains" value="B=322-599"/>
</dbReference>
<dbReference type="PDB" id="6NCT">
    <property type="method" value="X-ray"/>
    <property type="resolution" value="3.35 A"/>
    <property type="chains" value="B=322-600"/>
</dbReference>
<dbReference type="PDB" id="6PYR">
    <property type="method" value="X-ray"/>
    <property type="resolution" value="2.21 A"/>
    <property type="chains" value="B=431-599"/>
</dbReference>
<dbReference type="PDB" id="6PYU">
    <property type="method" value="X-ray"/>
    <property type="resolution" value="2.54 A"/>
    <property type="chains" value="B=431-599"/>
</dbReference>
<dbReference type="PDB" id="7CIO">
    <property type="method" value="X-ray"/>
    <property type="resolution" value="1.10 A"/>
    <property type="chains" value="A=614-720"/>
</dbReference>
<dbReference type="PDB" id="7LM2">
    <property type="method" value="X-ray"/>
    <property type="resolution" value="2.79 A"/>
    <property type="chains" value="B=431-599"/>
</dbReference>
<dbReference type="PDB" id="7LQ1">
    <property type="method" value="X-ray"/>
    <property type="resolution" value="2.96 A"/>
    <property type="chains" value="B=431-599"/>
</dbReference>
<dbReference type="PDB" id="7MYN">
    <property type="method" value="EM"/>
    <property type="resolution" value="2.79 A"/>
    <property type="chains" value="B=3-724"/>
</dbReference>
<dbReference type="PDB" id="7MYO">
    <property type="method" value="EM"/>
    <property type="resolution" value="2.92 A"/>
    <property type="chains" value="B=3-724"/>
</dbReference>
<dbReference type="PDB" id="7PG5">
    <property type="method" value="X-ray"/>
    <property type="resolution" value="2.20 A"/>
    <property type="chains" value="B=307-593"/>
</dbReference>
<dbReference type="PDB" id="7PG6">
    <property type="method" value="X-ray"/>
    <property type="resolution" value="2.50 A"/>
    <property type="chains" value="B=307-593"/>
</dbReference>
<dbReference type="PDB" id="7RNS">
    <property type="method" value="X-ray"/>
    <property type="resolution" value="1.14 A"/>
    <property type="chains" value="A=321-434"/>
</dbReference>
<dbReference type="PDB" id="7TZ7">
    <property type="method" value="X-ray"/>
    <property type="resolution" value="2.41 A"/>
    <property type="chains" value="B=306-591"/>
</dbReference>
<dbReference type="PDB" id="8AM0">
    <property type="method" value="X-ray"/>
    <property type="resolution" value="2.82 A"/>
    <property type="chains" value="B=308-593"/>
</dbReference>
<dbReference type="PDB" id="8DCP">
    <property type="method" value="EM"/>
    <property type="resolution" value="2.41 A"/>
    <property type="chains" value="B=3-724"/>
</dbReference>
<dbReference type="PDB" id="8DCX">
    <property type="method" value="EM"/>
    <property type="resolution" value="2.80 A"/>
    <property type="chains" value="B=3-724"/>
</dbReference>
<dbReference type="PDB" id="8DD4">
    <property type="method" value="EM"/>
    <property type="resolution" value="3.10 A"/>
    <property type="chains" value="B=3-724"/>
</dbReference>
<dbReference type="PDB" id="8DD8">
    <property type="method" value="EM"/>
    <property type="resolution" value="3.40 A"/>
    <property type="chains" value="B=3-724"/>
</dbReference>
<dbReference type="PDB" id="8GUB">
    <property type="method" value="EM"/>
    <property type="resolution" value="2.73 A"/>
    <property type="chains" value="B=3-724"/>
</dbReference>
<dbReference type="PDB" id="8H36">
    <property type="method" value="EM"/>
    <property type="resolution" value="4.60 A"/>
    <property type="chains" value="G/H=1-724"/>
</dbReference>
<dbReference type="PDB" id="8H37">
    <property type="method" value="EM"/>
    <property type="resolution" value="7.52 A"/>
    <property type="chains" value="G/H/I/J=1-724"/>
</dbReference>
<dbReference type="PDB" id="8ILR">
    <property type="method" value="EM"/>
    <property type="resolution" value="3.05 A"/>
    <property type="chains" value="B=3-724"/>
</dbReference>
<dbReference type="PDB" id="8ILS">
    <property type="method" value="EM"/>
    <property type="resolution" value="3.10 A"/>
    <property type="chains" value="B=3-724"/>
</dbReference>
<dbReference type="PDB" id="8ILV">
    <property type="method" value="EM"/>
    <property type="resolution" value="3.19 A"/>
    <property type="chains" value="B=3-724"/>
</dbReference>
<dbReference type="PDB" id="8SBC">
    <property type="method" value="X-ray"/>
    <property type="resolution" value="2.30 A"/>
    <property type="chains" value="B=306-593"/>
</dbReference>
<dbReference type="PDB" id="8SBJ">
    <property type="method" value="X-ray"/>
    <property type="resolution" value="3.10 A"/>
    <property type="chains" value="B=306-593"/>
</dbReference>
<dbReference type="PDB" id="8TDU">
    <property type="method" value="X-ray"/>
    <property type="resolution" value="3.11 A"/>
    <property type="chains" value="B/D=308-593"/>
</dbReference>
<dbReference type="PDB" id="8TGD">
    <property type="method" value="X-ray"/>
    <property type="resolution" value="2.93 A"/>
    <property type="chains" value="B/D=308-593"/>
</dbReference>
<dbReference type="PDB" id="8TS7">
    <property type="method" value="X-ray"/>
    <property type="resolution" value="2.71 A"/>
    <property type="chains" value="B=318-615"/>
</dbReference>
<dbReference type="PDB" id="8TS8">
    <property type="method" value="X-ray"/>
    <property type="resolution" value="2.72 A"/>
    <property type="chains" value="B=318-615"/>
</dbReference>
<dbReference type="PDB" id="8TS9">
    <property type="method" value="X-ray"/>
    <property type="resolution" value="2.83 A"/>
    <property type="chains" value="B=318-615"/>
</dbReference>
<dbReference type="PDB" id="8TSA">
    <property type="method" value="X-ray"/>
    <property type="resolution" value="2.51 A"/>
    <property type="chains" value="B=318-615"/>
</dbReference>
<dbReference type="PDB" id="8TSB">
    <property type="method" value="X-ray"/>
    <property type="resolution" value="3.53 A"/>
    <property type="chains" value="B=318-615"/>
</dbReference>
<dbReference type="PDB" id="8TSC">
    <property type="method" value="X-ray"/>
    <property type="resolution" value="3.62 A"/>
    <property type="chains" value="B=318-615"/>
</dbReference>
<dbReference type="PDB" id="8TSD">
    <property type="method" value="X-ray"/>
    <property type="resolution" value="2.70 A"/>
    <property type="chains" value="B=318-615"/>
</dbReference>
<dbReference type="PDB" id="8TU6">
    <property type="method" value="EM"/>
    <property type="resolution" value="3.12 A"/>
    <property type="chains" value="B=1-724"/>
</dbReference>
<dbReference type="PDB" id="8V8H">
    <property type="method" value="X-ray"/>
    <property type="resolution" value="3.58 A"/>
    <property type="chains" value="B/D=322-600"/>
</dbReference>
<dbReference type="PDB" id="8V8I">
    <property type="method" value="X-ray"/>
    <property type="resolution" value="3.20 A"/>
    <property type="chains" value="B/D=322-600"/>
</dbReference>
<dbReference type="PDB" id="8V8J">
    <property type="method" value="X-ray"/>
    <property type="resolution" value="3.35 A"/>
    <property type="chains" value="B/D=322-600"/>
</dbReference>
<dbReference type="PDB" id="8V8U">
    <property type="method" value="X-ray"/>
    <property type="resolution" value="2.93 A"/>
    <property type="chains" value="B/D=322-600"/>
</dbReference>
<dbReference type="PDB" id="8V8V">
    <property type="method" value="X-ray"/>
    <property type="resolution" value="2.61 A"/>
    <property type="chains" value="B/D=322-600"/>
</dbReference>
<dbReference type="PDB" id="8W9A">
    <property type="method" value="EM"/>
    <property type="resolution" value="2.70 A"/>
    <property type="chains" value="B=1-724"/>
</dbReference>
<dbReference type="PDB" id="8W9B">
    <property type="method" value="EM"/>
    <property type="resolution" value="3.00 A"/>
    <property type="chains" value="B=322-600"/>
</dbReference>
<dbReference type="PDBsum" id="1A0N"/>
<dbReference type="PDBsum" id="1AZG"/>
<dbReference type="PDBsum" id="1H9O"/>
<dbReference type="PDBsum" id="1PBW"/>
<dbReference type="PDBsum" id="1PHT"/>
<dbReference type="PDBsum" id="1PIC"/>
<dbReference type="PDBsum" id="1PKS"/>
<dbReference type="PDBsum" id="1PKT"/>
<dbReference type="PDBsum" id="2IUG"/>
<dbReference type="PDBsum" id="2IUH"/>
<dbReference type="PDBsum" id="2IUI"/>
<dbReference type="PDBsum" id="2RD0"/>
<dbReference type="PDBsum" id="2V1Y"/>
<dbReference type="PDBsum" id="3HHM"/>
<dbReference type="PDBsum" id="3HIZ"/>
<dbReference type="PDBsum" id="3I5R"/>
<dbReference type="PDBsum" id="3I5S"/>
<dbReference type="PDBsum" id="4A55"/>
<dbReference type="PDBsum" id="4JPS"/>
<dbReference type="PDBsum" id="4L1B"/>
<dbReference type="PDBsum" id="4L23"/>
<dbReference type="PDBsum" id="4L2Y"/>
<dbReference type="PDBsum" id="4OVU"/>
<dbReference type="PDBsum" id="4OVV"/>
<dbReference type="PDBsum" id="4WAF"/>
<dbReference type="PDBsum" id="4YKN"/>
<dbReference type="PDBsum" id="4ZOP"/>
<dbReference type="PDBsum" id="5AUL"/>
<dbReference type="PDBsum" id="5FI4"/>
<dbReference type="PDBsum" id="5GJI"/>
<dbReference type="PDBsum" id="5ITD"/>
<dbReference type="PDBsum" id="5M6U"/>
<dbReference type="PDBsum" id="5SW8"/>
<dbReference type="PDBsum" id="5SWG"/>
<dbReference type="PDBsum" id="5SWO"/>
<dbReference type="PDBsum" id="5SWP"/>
<dbReference type="PDBsum" id="5SWR"/>
<dbReference type="PDBsum" id="5SWT"/>
<dbReference type="PDBsum" id="5SX8"/>
<dbReference type="PDBsum" id="5SX9"/>
<dbReference type="PDBsum" id="5SXA"/>
<dbReference type="PDBsum" id="5SXB"/>
<dbReference type="PDBsum" id="5SXC"/>
<dbReference type="PDBsum" id="5SXD"/>
<dbReference type="PDBsum" id="5SXE"/>
<dbReference type="PDBsum" id="5SXF"/>
<dbReference type="PDBsum" id="5SXI"/>
<dbReference type="PDBsum" id="5SXJ"/>
<dbReference type="PDBsum" id="5SXK"/>
<dbReference type="PDBsum" id="5UBT"/>
<dbReference type="PDBsum" id="5UK8"/>
<dbReference type="PDBsum" id="5UKJ"/>
<dbReference type="PDBsum" id="5UL1"/>
<dbReference type="PDBsum" id="5VLR"/>
<dbReference type="PDBsum" id="5XGH"/>
<dbReference type="PDBsum" id="5XGI"/>
<dbReference type="PDBsum" id="5XGJ"/>
<dbReference type="PDBsum" id="6NCT"/>
<dbReference type="PDBsum" id="6PYR"/>
<dbReference type="PDBsum" id="6PYU"/>
<dbReference type="PDBsum" id="7CIO"/>
<dbReference type="PDBsum" id="7LM2"/>
<dbReference type="PDBsum" id="7LQ1"/>
<dbReference type="PDBsum" id="7MYN"/>
<dbReference type="PDBsum" id="7MYO"/>
<dbReference type="PDBsum" id="7PG5"/>
<dbReference type="PDBsum" id="7PG6"/>
<dbReference type="PDBsum" id="7RNS"/>
<dbReference type="PDBsum" id="7TZ7"/>
<dbReference type="PDBsum" id="8AM0"/>
<dbReference type="PDBsum" id="8DCP"/>
<dbReference type="PDBsum" id="8DCX"/>
<dbReference type="PDBsum" id="8DD4"/>
<dbReference type="PDBsum" id="8DD8"/>
<dbReference type="PDBsum" id="8GUB"/>
<dbReference type="PDBsum" id="8H36"/>
<dbReference type="PDBsum" id="8H37"/>
<dbReference type="PDBsum" id="8ILR"/>
<dbReference type="PDBsum" id="8ILS"/>
<dbReference type="PDBsum" id="8ILV"/>
<dbReference type="PDBsum" id="8SBC"/>
<dbReference type="PDBsum" id="8SBJ"/>
<dbReference type="PDBsum" id="8TDU"/>
<dbReference type="PDBsum" id="8TGD"/>
<dbReference type="PDBsum" id="8TS7"/>
<dbReference type="PDBsum" id="8TS8"/>
<dbReference type="PDBsum" id="8TS9"/>
<dbReference type="PDBsum" id="8TSA"/>
<dbReference type="PDBsum" id="8TSB"/>
<dbReference type="PDBsum" id="8TSC"/>
<dbReference type="PDBsum" id="8TSD"/>
<dbReference type="PDBsum" id="8TU6"/>
<dbReference type="PDBsum" id="8V8H"/>
<dbReference type="PDBsum" id="8V8I"/>
<dbReference type="PDBsum" id="8V8J"/>
<dbReference type="PDBsum" id="8V8U"/>
<dbReference type="PDBsum" id="8V8V"/>
<dbReference type="PDBsum" id="8W9A"/>
<dbReference type="PDBsum" id="8W9B"/>
<dbReference type="BMRB" id="P27986"/>
<dbReference type="EMDB" id="EMD-24081"/>
<dbReference type="EMDB" id="EMD-24082"/>
<dbReference type="EMDB" id="EMD-27327"/>
<dbReference type="EMDB" id="EMD-27330"/>
<dbReference type="EMDB" id="EMD-27334"/>
<dbReference type="EMDB" id="EMD-27336"/>
<dbReference type="EMDB" id="EMD-34272"/>
<dbReference type="EMDB" id="EMD-34452"/>
<dbReference type="EMDB" id="EMD-34453"/>
<dbReference type="EMDB" id="EMD-35543"/>
<dbReference type="EMDB" id="EMD-35545"/>
<dbReference type="EMDB" id="EMD-35547"/>
<dbReference type="EMDB" id="EMD-37362"/>
<dbReference type="EMDB" id="EMD-37363"/>
<dbReference type="EMDB" id="EMD-41617"/>
<dbReference type="SMR" id="P27986"/>
<dbReference type="BioGRID" id="111313">
    <property type="interactions" value="366"/>
</dbReference>
<dbReference type="ComplexPortal" id="CPX-2384">
    <property type="entry name" value="Phosphatidylinositol 3-kinase complex class IA, p110alpha/p85alpha"/>
</dbReference>
<dbReference type="ComplexPortal" id="CPX-5970">
    <molecule id="P27986-2"/>
    <property type="entry name" value="Phosphatidylinositol 3-kinase complex class IA, p110alpha/p55alpha"/>
</dbReference>
<dbReference type="ComplexPortal" id="CPX-5971">
    <molecule id="P27986-3"/>
    <property type="entry name" value="Phosphatidylinositol 3-kinase complex class IA, p110alpha/p50alpha"/>
</dbReference>
<dbReference type="ComplexPortal" id="CPX-5972">
    <molecule id="P27986-3"/>
    <property type="entry name" value="Phosphatidylinositol 3-kinase complex class IA, p110beta/p50alpha"/>
</dbReference>
<dbReference type="ComplexPortal" id="CPX-5974">
    <molecule id="P27986-2"/>
    <property type="entry name" value="Phosphatidylinositol 3-kinase complex class IA, p110beta/p55alpha"/>
</dbReference>
<dbReference type="ComplexPortal" id="CPX-5975">
    <property type="entry name" value="Phosphatidylinositol 3-kinase complex class IA, p110beta/p85alpha"/>
</dbReference>
<dbReference type="ComplexPortal" id="CPX-5983">
    <property type="entry name" value="Phosphatidylinositol 3-kinase complex class IA, p110delta/p85alpha"/>
</dbReference>
<dbReference type="ComplexPortal" id="CPX-5984">
    <property type="entry name" value="Phosphatidylinositol 3-kinase complex class IA, p110delta/p55alpha"/>
</dbReference>
<dbReference type="ComplexPortal" id="CPX-5985">
    <molecule id="P27986-3"/>
    <property type="entry name" value="Phosphatidylinositol 3-kinase complex class IA, p110delta/p50alpha"/>
</dbReference>
<dbReference type="CORUM" id="P27986"/>
<dbReference type="DIP" id="DIP-119N"/>
<dbReference type="FunCoup" id="P27986">
    <property type="interactions" value="3724"/>
</dbReference>
<dbReference type="IntAct" id="P27986">
    <property type="interactions" value="364"/>
</dbReference>
<dbReference type="MINT" id="P27986"/>
<dbReference type="STRING" id="9606.ENSP00000428056"/>
<dbReference type="BindingDB" id="P27986"/>
<dbReference type="ChEMBL" id="CHEMBL2506"/>
<dbReference type="DrugBank" id="DB06486">
    <property type="generic name" value="Enzastaurin"/>
</dbReference>
<dbReference type="DrugBank" id="DB05210">
    <property type="generic name" value="SF1126"/>
</dbReference>
<dbReference type="DrugBank" id="DB08059">
    <property type="generic name" value="Wortmannin"/>
</dbReference>
<dbReference type="DrugCentral" id="P27986"/>
<dbReference type="MoonDB" id="P27986">
    <property type="type" value="Predicted"/>
</dbReference>
<dbReference type="GlyGen" id="P27986">
    <property type="glycosylation" value="1 site, 1 N-linked glycan (1 site)"/>
</dbReference>
<dbReference type="iPTMnet" id="P27986"/>
<dbReference type="PhosphoSitePlus" id="P27986"/>
<dbReference type="BioMuta" id="PIK3R1"/>
<dbReference type="DMDM" id="118572681"/>
<dbReference type="CPTAC" id="CPTAC-1539"/>
<dbReference type="CPTAC" id="CPTAC-1626"/>
<dbReference type="CPTAC" id="CPTAC-1740"/>
<dbReference type="jPOST" id="P27986"/>
<dbReference type="MassIVE" id="P27986"/>
<dbReference type="PaxDb" id="9606-ENSP00000428056"/>
<dbReference type="PeptideAtlas" id="P27986"/>
<dbReference type="ProteomicsDB" id="18961"/>
<dbReference type="ProteomicsDB" id="54429">
    <molecule id="P27986-1"/>
</dbReference>
<dbReference type="ProteomicsDB" id="54430">
    <molecule id="P27986-2"/>
</dbReference>
<dbReference type="ProteomicsDB" id="54431">
    <molecule id="P27986-3"/>
</dbReference>
<dbReference type="ProteomicsDB" id="54432">
    <molecule id="P27986-4"/>
</dbReference>
<dbReference type="Pumba" id="P27986"/>
<dbReference type="Antibodypedia" id="717">
    <property type="antibodies" value="1119 antibodies from 47 providers"/>
</dbReference>
<dbReference type="DNASU" id="5295"/>
<dbReference type="Ensembl" id="ENST00000320694.13">
    <molecule id="P27986-3"/>
    <property type="protein sequence ID" value="ENSP00000323512.8"/>
    <property type="gene ID" value="ENSG00000145675.16"/>
</dbReference>
<dbReference type="Ensembl" id="ENST00000336483.10">
    <molecule id="P27986-2"/>
    <property type="protein sequence ID" value="ENSP00000338554.5"/>
    <property type="gene ID" value="ENSG00000145675.16"/>
</dbReference>
<dbReference type="Ensembl" id="ENST00000517643.2">
    <molecule id="P27986-1"/>
    <property type="protein sequence ID" value="ENSP00000513333.1"/>
    <property type="gene ID" value="ENSG00000145675.16"/>
</dbReference>
<dbReference type="Ensembl" id="ENST00000521381.6">
    <molecule id="P27986-1"/>
    <property type="protein sequence ID" value="ENSP00000428056.1"/>
    <property type="gene ID" value="ENSG00000145675.16"/>
</dbReference>
<dbReference type="Ensembl" id="ENST00000521657.6">
    <molecule id="P27986-1"/>
    <property type="protein sequence ID" value="ENSP00000429277.1"/>
    <property type="gene ID" value="ENSG00000145675.16"/>
</dbReference>
<dbReference type="Ensembl" id="ENST00000523872.1">
    <molecule id="P27986-5"/>
    <property type="protein sequence ID" value="ENSP00000430098.1"/>
    <property type="gene ID" value="ENSG00000145675.16"/>
</dbReference>
<dbReference type="Ensembl" id="ENST00000697458.1">
    <molecule id="P27986-1"/>
    <property type="protein sequence ID" value="ENSP00000513316.1"/>
    <property type="gene ID" value="ENSG00000145675.16"/>
</dbReference>
<dbReference type="Ensembl" id="ENST00000697461.1">
    <molecule id="P27986-4"/>
    <property type="protein sequence ID" value="ENSP00000513319.1"/>
    <property type="gene ID" value="ENSG00000145675.16"/>
</dbReference>
<dbReference type="Ensembl" id="ENST00000697467.1">
    <molecule id="P27986-5"/>
    <property type="protein sequence ID" value="ENSP00000513325.1"/>
    <property type="gene ID" value="ENSG00000145675.16"/>
</dbReference>
<dbReference type="GeneID" id="5295"/>
<dbReference type="KEGG" id="hsa:5295"/>
<dbReference type="MANE-Select" id="ENST00000521381.6">
    <property type="protein sequence ID" value="ENSP00000428056.1"/>
    <property type="RefSeq nucleotide sequence ID" value="NM_181523.3"/>
    <property type="RefSeq protein sequence ID" value="NP_852664.1"/>
</dbReference>
<dbReference type="UCSC" id="uc003jva.4">
    <molecule id="P27986-1"/>
    <property type="organism name" value="human"/>
</dbReference>
<dbReference type="AGR" id="HGNC:8979"/>
<dbReference type="CTD" id="5295"/>
<dbReference type="DisGeNET" id="5295"/>
<dbReference type="GeneCards" id="PIK3R1"/>
<dbReference type="GeneReviews" id="PIK3R1"/>
<dbReference type="HGNC" id="HGNC:8979">
    <property type="gene designation" value="PIK3R1"/>
</dbReference>
<dbReference type="HPA" id="ENSG00000145675">
    <property type="expression patterns" value="Low tissue specificity"/>
</dbReference>
<dbReference type="MalaCards" id="PIK3R1"/>
<dbReference type="MIM" id="171833">
    <property type="type" value="gene"/>
</dbReference>
<dbReference type="MIM" id="269880">
    <property type="type" value="phenotype"/>
</dbReference>
<dbReference type="MIM" id="615214">
    <property type="type" value="phenotype"/>
</dbReference>
<dbReference type="MIM" id="616005">
    <property type="type" value="phenotype"/>
</dbReference>
<dbReference type="neXtProt" id="NX_P27986"/>
<dbReference type="OpenTargets" id="ENSG00000145675"/>
<dbReference type="Orphanet" id="397596">
    <property type="disease" value="Activated PI3K-delta syndrome"/>
</dbReference>
<dbReference type="Orphanet" id="33110">
    <property type="disease" value="Autosomal non-syndromic agammaglobulinemia"/>
</dbReference>
<dbReference type="Orphanet" id="3163">
    <property type="disease" value="SHORT syndrome"/>
</dbReference>
<dbReference type="PharmGKB" id="PA33312"/>
<dbReference type="VEuPathDB" id="HostDB:ENSG00000145675"/>
<dbReference type="eggNOG" id="KOG4637">
    <property type="taxonomic scope" value="Eukaryota"/>
</dbReference>
<dbReference type="GeneTree" id="ENSGT00940000155553"/>
<dbReference type="HOGENOM" id="CLU_007031_1_0_1"/>
<dbReference type="InParanoid" id="P27986"/>
<dbReference type="OMA" id="EMIDVQV"/>
<dbReference type="OrthoDB" id="3175255at2759"/>
<dbReference type="PAN-GO" id="P27986">
    <property type="GO annotations" value="5 GO annotations based on evolutionary models"/>
</dbReference>
<dbReference type="PhylomeDB" id="P27986"/>
<dbReference type="TreeFam" id="TF102033"/>
<dbReference type="BioCyc" id="MetaCyc:ENSG00000145675-MONOMER"/>
<dbReference type="BRENDA" id="2.7.1.153">
    <property type="organism ID" value="2681"/>
</dbReference>
<dbReference type="PathwayCommons" id="P27986"/>
<dbReference type="Reactome" id="R-HSA-109704">
    <property type="pathway name" value="PI3K Cascade"/>
</dbReference>
<dbReference type="Reactome" id="R-HSA-112399">
    <property type="pathway name" value="IRS-mediated signalling"/>
</dbReference>
<dbReference type="Reactome" id="R-HSA-114604">
    <property type="pathway name" value="GPVI-mediated activation cascade"/>
</dbReference>
<dbReference type="Reactome" id="R-HSA-1236382">
    <property type="pathway name" value="Constitutive Signaling by Ligand-Responsive EGFR Cancer Variants"/>
</dbReference>
<dbReference type="Reactome" id="R-HSA-1250342">
    <property type="pathway name" value="PI3K events in ERBB4 signaling"/>
</dbReference>
<dbReference type="Reactome" id="R-HSA-1257604">
    <property type="pathway name" value="PIP3 activates AKT signaling"/>
</dbReference>
<dbReference type="Reactome" id="R-HSA-1266695">
    <property type="pathway name" value="Interleukin-7 signaling"/>
</dbReference>
<dbReference type="Reactome" id="R-HSA-1433557">
    <property type="pathway name" value="Signaling by SCF-KIT"/>
</dbReference>
<dbReference type="Reactome" id="R-HSA-1660499">
    <property type="pathway name" value="Synthesis of PIPs at the plasma membrane"/>
</dbReference>
<dbReference type="Reactome" id="R-HSA-180292">
    <property type="pathway name" value="GAB1 signalosome"/>
</dbReference>
<dbReference type="Reactome" id="R-HSA-1839117">
    <property type="pathway name" value="Signaling by cytosolic FGFR1 fusion mutants"/>
</dbReference>
<dbReference type="Reactome" id="R-HSA-186763">
    <property type="pathway name" value="Downstream signal transduction"/>
</dbReference>
<dbReference type="Reactome" id="R-HSA-1963642">
    <property type="pathway name" value="PI3K events in ERBB2 signaling"/>
</dbReference>
<dbReference type="Reactome" id="R-HSA-198203">
    <property type="pathway name" value="PI3K/AKT activation"/>
</dbReference>
<dbReference type="Reactome" id="R-HSA-201556">
    <property type="pathway name" value="Signaling by ALK"/>
</dbReference>
<dbReference type="Reactome" id="R-HSA-202424">
    <property type="pathway name" value="Downstream TCR signaling"/>
</dbReference>
<dbReference type="Reactome" id="R-HSA-2029485">
    <property type="pathway name" value="Role of phospholipids in phagocytosis"/>
</dbReference>
<dbReference type="Reactome" id="R-HSA-210993">
    <property type="pathway name" value="Tie2 Signaling"/>
</dbReference>
<dbReference type="Reactome" id="R-HSA-2219530">
    <property type="pathway name" value="Constitutive Signaling by Aberrant PI3K in Cancer"/>
</dbReference>
<dbReference type="Reactome" id="R-HSA-2424491">
    <property type="pathway name" value="DAP12 signaling"/>
</dbReference>
<dbReference type="Reactome" id="R-HSA-2730905">
    <property type="pathway name" value="Role of LAT2/NTAL/LAB on calcium mobilization"/>
</dbReference>
<dbReference type="Reactome" id="R-HSA-373753">
    <property type="pathway name" value="Nephrin family interactions"/>
</dbReference>
<dbReference type="Reactome" id="R-HSA-389357">
    <property type="pathway name" value="CD28 dependent PI3K/Akt signaling"/>
</dbReference>
<dbReference type="Reactome" id="R-HSA-416476">
    <property type="pathway name" value="G alpha (q) signalling events"/>
</dbReference>
<dbReference type="Reactome" id="R-HSA-430116">
    <property type="pathway name" value="GP1b-IX-V activation signalling"/>
</dbReference>
<dbReference type="Reactome" id="R-HSA-4420097">
    <property type="pathway name" value="VEGFA-VEGFR2 Pathway"/>
</dbReference>
<dbReference type="Reactome" id="R-HSA-512988">
    <property type="pathway name" value="Interleukin-3, Interleukin-5 and GM-CSF signaling"/>
</dbReference>
<dbReference type="Reactome" id="R-HSA-5637810">
    <property type="pathway name" value="Constitutive Signaling by EGFRvIII"/>
</dbReference>
<dbReference type="Reactome" id="R-HSA-5654689">
    <property type="pathway name" value="PI-3K cascade:FGFR1"/>
</dbReference>
<dbReference type="Reactome" id="R-HSA-5654695">
    <property type="pathway name" value="PI-3K cascade:FGFR2"/>
</dbReference>
<dbReference type="Reactome" id="R-HSA-5654710">
    <property type="pathway name" value="PI-3K cascade:FGFR3"/>
</dbReference>
<dbReference type="Reactome" id="R-HSA-5654720">
    <property type="pathway name" value="PI-3K cascade:FGFR4"/>
</dbReference>
<dbReference type="Reactome" id="R-HSA-5655253">
    <property type="pathway name" value="Signaling by FGFR2 in disease"/>
</dbReference>
<dbReference type="Reactome" id="R-HSA-5655291">
    <property type="pathway name" value="Signaling by FGFR4 in disease"/>
</dbReference>
<dbReference type="Reactome" id="R-HSA-5655302">
    <property type="pathway name" value="Signaling by FGFR1 in disease"/>
</dbReference>
<dbReference type="Reactome" id="R-HSA-5655332">
    <property type="pathway name" value="Signaling by FGFR3 in disease"/>
</dbReference>
<dbReference type="Reactome" id="R-HSA-5673001">
    <property type="pathway name" value="RAF/MAP kinase cascade"/>
</dbReference>
<dbReference type="Reactome" id="R-HSA-6785807">
    <property type="pathway name" value="Interleukin-4 and Interleukin-13 signaling"/>
</dbReference>
<dbReference type="Reactome" id="R-HSA-6811558">
    <property type="pathway name" value="PI5P, PP2A and IER3 Regulate PI3K/AKT Signaling"/>
</dbReference>
<dbReference type="Reactome" id="R-HSA-8851907">
    <property type="pathway name" value="MET activates PI3K/AKT signaling"/>
</dbReference>
<dbReference type="Reactome" id="R-HSA-8853659">
    <property type="pathway name" value="RET signaling"/>
</dbReference>
<dbReference type="Reactome" id="R-HSA-8980692">
    <property type="pathway name" value="RHOA GTPase cycle"/>
</dbReference>
<dbReference type="Reactome" id="R-HSA-9009391">
    <property type="pathway name" value="Extra-nuclear estrogen signaling"/>
</dbReference>
<dbReference type="Reactome" id="R-HSA-9013026">
    <property type="pathway name" value="RHOB GTPase cycle"/>
</dbReference>
<dbReference type="Reactome" id="R-HSA-9013106">
    <property type="pathway name" value="RHOC GTPase cycle"/>
</dbReference>
<dbReference type="Reactome" id="R-HSA-9013148">
    <property type="pathway name" value="CDC42 GTPase cycle"/>
</dbReference>
<dbReference type="Reactome" id="R-HSA-9013149">
    <property type="pathway name" value="RAC1 GTPase cycle"/>
</dbReference>
<dbReference type="Reactome" id="R-HSA-9013404">
    <property type="pathway name" value="RAC2 GTPase cycle"/>
</dbReference>
<dbReference type="Reactome" id="R-HSA-9013405">
    <property type="pathway name" value="RHOD GTPase cycle"/>
</dbReference>
<dbReference type="Reactome" id="R-HSA-9013408">
    <property type="pathway name" value="RHOG GTPase cycle"/>
</dbReference>
<dbReference type="Reactome" id="R-HSA-9013409">
    <property type="pathway name" value="RHOJ GTPase cycle"/>
</dbReference>
<dbReference type="Reactome" id="R-HSA-9013420">
    <property type="pathway name" value="RHOU GTPase cycle"/>
</dbReference>
<dbReference type="Reactome" id="R-HSA-9013423">
    <property type="pathway name" value="RAC3 GTPase cycle"/>
</dbReference>
<dbReference type="Reactome" id="R-HSA-9013424">
    <property type="pathway name" value="RHOV GTPase cycle"/>
</dbReference>
<dbReference type="Reactome" id="R-HSA-9027276">
    <property type="pathway name" value="Erythropoietin activates Phosphoinositide-3-kinase (PI3K)"/>
</dbReference>
<dbReference type="Reactome" id="R-HSA-9028335">
    <property type="pathway name" value="Activated NTRK2 signals through PI3K"/>
</dbReference>
<dbReference type="Reactome" id="R-HSA-9035034">
    <property type="pathway name" value="RHOF GTPase cycle"/>
</dbReference>
<dbReference type="Reactome" id="R-HSA-912526">
    <property type="pathway name" value="Interleukin receptor SHC signaling"/>
</dbReference>
<dbReference type="Reactome" id="R-HSA-912631">
    <property type="pathway name" value="Regulation of signaling by CBL"/>
</dbReference>
<dbReference type="Reactome" id="R-HSA-9603381">
    <property type="pathway name" value="Activated NTRK3 signals through PI3K"/>
</dbReference>
<dbReference type="Reactome" id="R-HSA-9607240">
    <property type="pathway name" value="FLT3 Signaling"/>
</dbReference>
<dbReference type="Reactome" id="R-HSA-9664565">
    <property type="pathway name" value="Signaling by ERBB2 KD Mutants"/>
</dbReference>
<dbReference type="Reactome" id="R-HSA-9665348">
    <property type="pathway name" value="Signaling by ERBB2 ECD mutants"/>
</dbReference>
<dbReference type="Reactome" id="R-HSA-9670439">
    <property type="pathway name" value="Signaling by phosphorylated juxtamembrane, extracellular and kinase domain KIT mutants"/>
</dbReference>
<dbReference type="Reactome" id="R-HSA-9673767">
    <property type="pathway name" value="Signaling by PDGFRA transmembrane, juxtamembrane and kinase domain mutants"/>
</dbReference>
<dbReference type="Reactome" id="R-HSA-9673770">
    <property type="pathway name" value="Signaling by PDGFRA extracellular domain mutants"/>
</dbReference>
<dbReference type="Reactome" id="R-HSA-9680350">
    <property type="pathway name" value="Signaling by CSF1 (M-CSF) in myeloid cells"/>
</dbReference>
<dbReference type="Reactome" id="R-HSA-9696264">
    <property type="pathway name" value="RND3 GTPase cycle"/>
</dbReference>
<dbReference type="Reactome" id="R-HSA-9696270">
    <property type="pathway name" value="RND2 GTPase cycle"/>
</dbReference>
<dbReference type="Reactome" id="R-HSA-9696273">
    <property type="pathway name" value="RND1 GTPase cycle"/>
</dbReference>
<dbReference type="Reactome" id="R-HSA-9703465">
    <property type="pathway name" value="Signaling by FLT3 fusion proteins"/>
</dbReference>
<dbReference type="Reactome" id="R-HSA-9703648">
    <property type="pathway name" value="Signaling by FLT3 ITD and TKD mutants"/>
</dbReference>
<dbReference type="Reactome" id="R-HSA-9725370">
    <property type="pathway name" value="Signaling by ALK fusions and activated point mutants"/>
</dbReference>
<dbReference type="Reactome" id="R-HSA-983695">
    <property type="pathway name" value="Antigen activates B Cell Receptor (BCR) leading to generation of second messengers"/>
</dbReference>
<dbReference type="Reactome" id="R-HSA-9842640">
    <property type="pathway name" value="Signaling by LTK in cancer"/>
</dbReference>
<dbReference type="Reactome" id="R-HSA-9842663">
    <property type="pathway name" value="Signaling by LTK"/>
</dbReference>
<dbReference type="Reactome" id="R-HSA-9927354">
    <property type="pathway name" value="Co-stimulation by ICOS"/>
</dbReference>
<dbReference type="SABIO-RK" id="P27986"/>
<dbReference type="SignaLink" id="P27986"/>
<dbReference type="SIGNOR" id="P27986"/>
<dbReference type="BioGRID-ORCS" id="5295">
    <property type="hits" value="30 hits in 1189 CRISPR screens"/>
</dbReference>
<dbReference type="ChiTaRS" id="PIK3R1">
    <property type="organism name" value="human"/>
</dbReference>
<dbReference type="EvolutionaryTrace" id="P27986"/>
<dbReference type="GeneWiki" id="PIK3R1"/>
<dbReference type="GenomeRNAi" id="5295"/>
<dbReference type="Pharos" id="P27986">
    <property type="development level" value="Tchem"/>
</dbReference>
<dbReference type="PRO" id="PR:P27986"/>
<dbReference type="Proteomes" id="UP000005640">
    <property type="component" value="Chromosome 5"/>
</dbReference>
<dbReference type="RNAct" id="P27986">
    <property type="molecule type" value="protein"/>
</dbReference>
<dbReference type="Bgee" id="ENSG00000145675">
    <property type="expression patterns" value="Expressed in calcaneal tendon and 224 other cell types or tissues"/>
</dbReference>
<dbReference type="ExpressionAtlas" id="P27986">
    <property type="expression patterns" value="baseline and differential"/>
</dbReference>
<dbReference type="GO" id="GO:0005911">
    <property type="term" value="C:cell-cell junction"/>
    <property type="evidence" value="ECO:0007669"/>
    <property type="project" value="Ensembl"/>
</dbReference>
<dbReference type="GO" id="GO:0005801">
    <property type="term" value="C:cis-Golgi network"/>
    <property type="evidence" value="ECO:0007669"/>
    <property type="project" value="Ensembl"/>
</dbReference>
<dbReference type="GO" id="GO:0005737">
    <property type="term" value="C:cytoplasm"/>
    <property type="evidence" value="ECO:0000314"/>
    <property type="project" value="UniProtKB"/>
</dbReference>
<dbReference type="GO" id="GO:0005829">
    <property type="term" value="C:cytosol"/>
    <property type="evidence" value="ECO:0000304"/>
    <property type="project" value="Reactome"/>
</dbReference>
<dbReference type="GO" id="GO:0016020">
    <property type="term" value="C:membrane"/>
    <property type="evidence" value="ECO:0007005"/>
    <property type="project" value="UniProtKB"/>
</dbReference>
<dbReference type="GO" id="GO:0005634">
    <property type="term" value="C:nucleus"/>
    <property type="evidence" value="ECO:0000250"/>
    <property type="project" value="UniProtKB"/>
</dbReference>
<dbReference type="GO" id="GO:1990578">
    <property type="term" value="C:perinuclear endoplasmic reticulum membrane"/>
    <property type="evidence" value="ECO:0007669"/>
    <property type="project" value="Ensembl"/>
</dbReference>
<dbReference type="GO" id="GO:0048471">
    <property type="term" value="C:perinuclear region of cytoplasm"/>
    <property type="evidence" value="ECO:0000250"/>
    <property type="project" value="BHF-UCL"/>
</dbReference>
<dbReference type="GO" id="GO:0005942">
    <property type="term" value="C:phosphatidylinositol 3-kinase complex"/>
    <property type="evidence" value="ECO:0000250"/>
    <property type="project" value="BHF-UCL"/>
</dbReference>
<dbReference type="GO" id="GO:0005943">
    <property type="term" value="C:phosphatidylinositol 3-kinase complex, class IA"/>
    <property type="evidence" value="ECO:0000353"/>
    <property type="project" value="ComplexPortal"/>
</dbReference>
<dbReference type="GO" id="GO:0005886">
    <property type="term" value="C:plasma membrane"/>
    <property type="evidence" value="ECO:0000304"/>
    <property type="project" value="Reactome"/>
</dbReference>
<dbReference type="GO" id="GO:0046935">
    <property type="term" value="F:1-phosphatidylinositol-3-kinase regulator activity"/>
    <property type="evidence" value="ECO:0000318"/>
    <property type="project" value="GO_Central"/>
</dbReference>
<dbReference type="GO" id="GO:0140767">
    <property type="term" value="F:enzyme-substrate adaptor activity"/>
    <property type="evidence" value="ECO:0000250"/>
    <property type="project" value="BHF-UCL"/>
</dbReference>
<dbReference type="GO" id="GO:0043125">
    <property type="term" value="F:ErbB-3 class receptor binding"/>
    <property type="evidence" value="ECO:0000314"/>
    <property type="project" value="UniProtKB"/>
</dbReference>
<dbReference type="GO" id="GO:0043559">
    <property type="term" value="F:insulin binding"/>
    <property type="evidence" value="ECO:0000314"/>
    <property type="project" value="UniProtKB"/>
</dbReference>
<dbReference type="GO" id="GO:0005158">
    <property type="term" value="F:insulin receptor binding"/>
    <property type="evidence" value="ECO:0000353"/>
    <property type="project" value="UniProtKB"/>
</dbReference>
<dbReference type="GO" id="GO:0043560">
    <property type="term" value="F:insulin receptor substrate binding"/>
    <property type="evidence" value="ECO:0007669"/>
    <property type="project" value="Ensembl"/>
</dbReference>
<dbReference type="GO" id="GO:0005159">
    <property type="term" value="F:insulin-like growth factor receptor binding"/>
    <property type="evidence" value="ECO:0000353"/>
    <property type="project" value="UniProtKB"/>
</dbReference>
<dbReference type="GO" id="GO:0019209">
    <property type="term" value="F:kinase activator activity"/>
    <property type="evidence" value="ECO:0007669"/>
    <property type="project" value="Ensembl"/>
</dbReference>
<dbReference type="GO" id="GO:0005168">
    <property type="term" value="F:neurotrophin TRKA receptor binding"/>
    <property type="evidence" value="ECO:0000353"/>
    <property type="project" value="UniProtKB"/>
</dbReference>
<dbReference type="GO" id="GO:0141038">
    <property type="term" value="F:phosphatidylinositol 3-kinase activator activity"/>
    <property type="evidence" value="ECO:0000250"/>
    <property type="project" value="BHF-UCL"/>
</dbReference>
<dbReference type="GO" id="GO:0043548">
    <property type="term" value="F:phosphatidylinositol 3-kinase binding"/>
    <property type="evidence" value="ECO:0000250"/>
    <property type="project" value="BHF-UCL"/>
</dbReference>
<dbReference type="GO" id="GO:0035014">
    <property type="term" value="F:phosphatidylinositol 3-kinase regulator activity"/>
    <property type="evidence" value="ECO:0000314"/>
    <property type="project" value="UniProt"/>
</dbReference>
<dbReference type="GO" id="GO:0036312">
    <property type="term" value="F:phosphatidylinositol 3-kinase regulatory subunit binding"/>
    <property type="evidence" value="ECO:0007669"/>
    <property type="project" value="Ensembl"/>
</dbReference>
<dbReference type="GO" id="GO:0052742">
    <property type="term" value="F:phosphatidylinositol kinase activity"/>
    <property type="evidence" value="ECO:0000250"/>
    <property type="project" value="UniProt"/>
</dbReference>
<dbReference type="GO" id="GO:0001784">
    <property type="term" value="F:phosphotyrosine residue binding"/>
    <property type="evidence" value="ECO:0000353"/>
    <property type="project" value="CAFA"/>
</dbReference>
<dbReference type="GO" id="GO:0046982">
    <property type="term" value="F:protein heterodimerization activity"/>
    <property type="evidence" value="ECO:0007669"/>
    <property type="project" value="Ensembl"/>
</dbReference>
<dbReference type="GO" id="GO:0019903">
    <property type="term" value="F:protein phosphatase binding"/>
    <property type="evidence" value="ECO:0000353"/>
    <property type="project" value="UniProtKB"/>
</dbReference>
<dbReference type="GO" id="GO:0005068">
    <property type="term" value="F:transmembrane receptor protein tyrosine kinase adaptor activity"/>
    <property type="evidence" value="ECO:0000250"/>
    <property type="project" value="BHF-UCL"/>
</dbReference>
<dbReference type="GO" id="GO:0030183">
    <property type="term" value="P:B cell differentiation"/>
    <property type="evidence" value="ECO:0000303"/>
    <property type="project" value="ComplexPortal"/>
</dbReference>
<dbReference type="GO" id="GO:0032869">
    <property type="term" value="P:cellular response to insulin stimulus"/>
    <property type="evidence" value="ECO:0000314"/>
    <property type="project" value="UniProt"/>
</dbReference>
<dbReference type="GO" id="GO:0034644">
    <property type="term" value="P:cellular response to UV"/>
    <property type="evidence" value="ECO:0007669"/>
    <property type="project" value="Ensembl"/>
</dbReference>
<dbReference type="GO" id="GO:0019221">
    <property type="term" value="P:cytokine-mediated signaling pathway"/>
    <property type="evidence" value="ECO:0000316"/>
    <property type="project" value="BHF-UCL"/>
</dbReference>
<dbReference type="GO" id="GO:0008625">
    <property type="term" value="P:extrinsic apoptotic signaling pathway via death domain receptors"/>
    <property type="evidence" value="ECO:0007669"/>
    <property type="project" value="Ensembl"/>
</dbReference>
<dbReference type="GO" id="GO:0060396">
    <property type="term" value="P:growth hormone receptor signaling pathway"/>
    <property type="evidence" value="ECO:0000314"/>
    <property type="project" value="BHF-UCL"/>
</dbReference>
<dbReference type="GO" id="GO:0006955">
    <property type="term" value="P:immune response"/>
    <property type="evidence" value="ECO:0000303"/>
    <property type="project" value="ComplexPortal"/>
</dbReference>
<dbReference type="GO" id="GO:0008286">
    <property type="term" value="P:insulin receptor signaling pathway"/>
    <property type="evidence" value="ECO:0000318"/>
    <property type="project" value="GO_Central"/>
</dbReference>
<dbReference type="GO" id="GO:0048009">
    <property type="term" value="P:insulin-like growth factor receptor signaling pathway"/>
    <property type="evidence" value="ECO:0000314"/>
    <property type="project" value="BHF-UCL"/>
</dbReference>
<dbReference type="GO" id="GO:0035655">
    <property type="term" value="P:interleukin-18-mediated signaling pathway"/>
    <property type="evidence" value="ECO:0000315"/>
    <property type="project" value="BHF-UCL"/>
</dbReference>
<dbReference type="GO" id="GO:0001678">
    <property type="term" value="P:intracellular glucose homeostasis"/>
    <property type="evidence" value="ECO:0000250"/>
    <property type="project" value="UniProtKB"/>
</dbReference>
<dbReference type="GO" id="GO:0008630">
    <property type="term" value="P:intrinsic apoptotic signaling pathway in response to DNA damage"/>
    <property type="evidence" value="ECO:0007669"/>
    <property type="project" value="Ensembl"/>
</dbReference>
<dbReference type="GO" id="GO:0097529">
    <property type="term" value="P:myeloid leukocyte migration"/>
    <property type="evidence" value="ECO:0007669"/>
    <property type="project" value="Ensembl"/>
</dbReference>
<dbReference type="GO" id="GO:0042267">
    <property type="term" value="P:natural killer cell mediated cytotoxicity"/>
    <property type="evidence" value="ECO:0000314"/>
    <property type="project" value="UniProt"/>
</dbReference>
<dbReference type="GO" id="GO:0043066">
    <property type="term" value="P:negative regulation of apoptotic process"/>
    <property type="evidence" value="ECO:0000315"/>
    <property type="project" value="UniProtKB"/>
</dbReference>
<dbReference type="GO" id="GO:0001953">
    <property type="term" value="P:negative regulation of cell-matrix adhesion"/>
    <property type="evidence" value="ECO:0007669"/>
    <property type="project" value="Ensembl"/>
</dbReference>
<dbReference type="GO" id="GO:0045671">
    <property type="term" value="P:negative regulation of osteoclast differentiation"/>
    <property type="evidence" value="ECO:0007669"/>
    <property type="project" value="Ensembl"/>
</dbReference>
<dbReference type="GO" id="GO:0051497">
    <property type="term" value="P:negative regulation of stress fiber assembly"/>
    <property type="evidence" value="ECO:0000250"/>
    <property type="project" value="BHF-UCL"/>
</dbReference>
<dbReference type="GO" id="GO:0030316">
    <property type="term" value="P:osteoclast differentiation"/>
    <property type="evidence" value="ECO:0007669"/>
    <property type="project" value="Ensembl"/>
</dbReference>
<dbReference type="GO" id="GO:0043491">
    <property type="term" value="P:phosphatidylinositol 3-kinase/protein kinase B signal transduction"/>
    <property type="evidence" value="ECO:0000314"/>
    <property type="project" value="BHF-UCL"/>
</dbReference>
<dbReference type="GO" id="GO:0046854">
    <property type="term" value="P:phosphatidylinositol phosphate biosynthetic process"/>
    <property type="evidence" value="ECO:0000250"/>
    <property type="project" value="UniProtKB"/>
</dbReference>
<dbReference type="GO" id="GO:0046326">
    <property type="term" value="P:positive regulation of D-glucose import"/>
    <property type="evidence" value="ECO:0000250"/>
    <property type="project" value="BHF-UCL"/>
</dbReference>
<dbReference type="GO" id="GO:1900103">
    <property type="term" value="P:positive regulation of endoplasmic reticulum unfolded protein response"/>
    <property type="evidence" value="ECO:0000315"/>
    <property type="project" value="UniProtKB"/>
</dbReference>
<dbReference type="GO" id="GO:0051491">
    <property type="term" value="P:positive regulation of filopodium assembly"/>
    <property type="evidence" value="ECO:0000250"/>
    <property type="project" value="BHF-UCL"/>
</dbReference>
<dbReference type="GO" id="GO:0120183">
    <property type="term" value="P:positive regulation of focal adhesion disassembly"/>
    <property type="evidence" value="ECO:0000250"/>
    <property type="project" value="BHF-UCL"/>
</dbReference>
<dbReference type="GO" id="GO:0010592">
    <property type="term" value="P:positive regulation of lamellipodium assembly"/>
    <property type="evidence" value="ECO:0000250"/>
    <property type="project" value="BHF-UCL"/>
</dbReference>
<dbReference type="GO" id="GO:0002687">
    <property type="term" value="P:positive regulation of leukocyte migration"/>
    <property type="evidence" value="ECO:0007669"/>
    <property type="project" value="Ensembl"/>
</dbReference>
<dbReference type="GO" id="GO:0042307">
    <property type="term" value="P:positive regulation of protein import into nucleus"/>
    <property type="evidence" value="ECO:0000314"/>
    <property type="project" value="UniProtKB"/>
</dbReference>
<dbReference type="GO" id="GO:1903078">
    <property type="term" value="P:positive regulation of protein localization to plasma membrane"/>
    <property type="evidence" value="ECO:0000250"/>
    <property type="project" value="BHF-UCL"/>
</dbReference>
<dbReference type="GO" id="GO:0033120">
    <property type="term" value="P:positive regulation of RNA splicing"/>
    <property type="evidence" value="ECO:0000315"/>
    <property type="project" value="UniProtKB"/>
</dbReference>
<dbReference type="GO" id="GO:0048661">
    <property type="term" value="P:positive regulation of smooth muscle cell proliferation"/>
    <property type="evidence" value="ECO:0000315"/>
    <property type="project" value="BHF-UCL"/>
</dbReference>
<dbReference type="GO" id="GO:0045944">
    <property type="term" value="P:positive regulation of transcription by RNA polymerase II"/>
    <property type="evidence" value="ECO:0000315"/>
    <property type="project" value="UniProtKB"/>
</dbReference>
<dbReference type="GO" id="GO:0032760">
    <property type="term" value="P:positive regulation of tumor necrosis factor production"/>
    <property type="evidence" value="ECO:0007669"/>
    <property type="project" value="Ensembl"/>
</dbReference>
<dbReference type="GO" id="GO:0006606">
    <property type="term" value="P:protein import into nucleus"/>
    <property type="evidence" value="ECO:0007669"/>
    <property type="project" value="Ensembl"/>
</dbReference>
<dbReference type="GO" id="GO:0050821">
    <property type="term" value="P:protein stabilization"/>
    <property type="evidence" value="ECO:0000314"/>
    <property type="project" value="UniProtKB"/>
</dbReference>
<dbReference type="GO" id="GO:0034143">
    <property type="term" value="P:regulation of toll-like receptor 4 signaling pathway"/>
    <property type="evidence" value="ECO:0000314"/>
    <property type="project" value="UniProt"/>
</dbReference>
<dbReference type="GO" id="GO:0034976">
    <property type="term" value="P:response to endoplasmic reticulum stress"/>
    <property type="evidence" value="ECO:0000314"/>
    <property type="project" value="UniProtKB"/>
</dbReference>
<dbReference type="GO" id="GO:0034446">
    <property type="term" value="P:substrate adhesion-dependent cell spreading"/>
    <property type="evidence" value="ECO:0000250"/>
    <property type="project" value="BHF-UCL"/>
</dbReference>
<dbReference type="GO" id="GO:0030217">
    <property type="term" value="P:T cell differentiation"/>
    <property type="evidence" value="ECO:0000303"/>
    <property type="project" value="ComplexPortal"/>
</dbReference>
<dbReference type="GO" id="GO:0061470">
    <property type="term" value="P:T follicular helper cell differentiation"/>
    <property type="evidence" value="ECO:0000314"/>
    <property type="project" value="UniProt"/>
</dbReference>
<dbReference type="GO" id="GO:0006366">
    <property type="term" value="P:transcription by RNA polymerase II"/>
    <property type="evidence" value="ECO:0007669"/>
    <property type="project" value="Ensembl"/>
</dbReference>
<dbReference type="CDD" id="cd12924">
    <property type="entry name" value="iSH2_PIK3R1"/>
    <property type="match status" value="1"/>
</dbReference>
<dbReference type="CDD" id="cd04388">
    <property type="entry name" value="RhoGAP_p85"/>
    <property type="match status" value="1"/>
</dbReference>
<dbReference type="CDD" id="cd09930">
    <property type="entry name" value="SH2_cSH2_p85_like"/>
    <property type="match status" value="1"/>
</dbReference>
<dbReference type="CDD" id="cd09942">
    <property type="entry name" value="SH2_nSH2_p85_like"/>
    <property type="match status" value="1"/>
</dbReference>
<dbReference type="CDD" id="cd11910">
    <property type="entry name" value="SH3_PI3K_p85alpha"/>
    <property type="match status" value="1"/>
</dbReference>
<dbReference type="DisProt" id="DP01112"/>
<dbReference type="FunFam" id="1.10.555.10:FF:000035">
    <property type="entry name" value="Phosphatidylinositol 3-kinase regulatory subunit alpha"/>
    <property type="match status" value="1"/>
</dbReference>
<dbReference type="FunFam" id="3.30.505.10:FF:000006">
    <property type="entry name" value="Phosphatidylinositol 3-kinase regulatory subunit alpha"/>
    <property type="match status" value="1"/>
</dbReference>
<dbReference type="FunFam" id="3.30.505.10:FF:000014">
    <property type="entry name" value="Phosphatidylinositol 3-kinase regulatory subunit alpha"/>
    <property type="match status" value="1"/>
</dbReference>
<dbReference type="FunFam" id="2.30.30.40:FF:000075">
    <property type="entry name" value="phosphatidylinositol 3-kinase regulatory subunit alpha"/>
    <property type="match status" value="1"/>
</dbReference>
<dbReference type="FunFam" id="1.10.287.1490:FF:000001">
    <property type="entry name" value="Putative phosphatidylinositol 3-kinase regulatory subunit alpha"/>
    <property type="match status" value="1"/>
</dbReference>
<dbReference type="Gene3D" id="1.10.287.1490">
    <property type="match status" value="1"/>
</dbReference>
<dbReference type="Gene3D" id="1.10.555.10">
    <property type="entry name" value="Rho GTPase activation protein"/>
    <property type="match status" value="1"/>
</dbReference>
<dbReference type="Gene3D" id="3.30.505.10">
    <property type="entry name" value="SH2 domain"/>
    <property type="match status" value="2"/>
</dbReference>
<dbReference type="Gene3D" id="2.30.30.40">
    <property type="entry name" value="SH3 Domains"/>
    <property type="match status" value="1"/>
</dbReference>
<dbReference type="IDEAL" id="IID00713"/>
<dbReference type="InterPro" id="IPR044124">
    <property type="entry name" value="ISH2_PIK3R1"/>
</dbReference>
<dbReference type="InterPro" id="IPR032498">
    <property type="entry name" value="PI3K_P85_iSH2"/>
</dbReference>
<dbReference type="InterPro" id="IPR035591">
    <property type="entry name" value="PI3K_p85alpha_SH3"/>
</dbReference>
<dbReference type="InterPro" id="IPR035020">
    <property type="entry name" value="PI3kinase_P85_cSH2"/>
</dbReference>
<dbReference type="InterPro" id="IPR035022">
    <property type="entry name" value="PI3kinase_P85_nSH2"/>
</dbReference>
<dbReference type="InterPro" id="IPR008936">
    <property type="entry name" value="Rho_GTPase_activation_prot"/>
</dbReference>
<dbReference type="InterPro" id="IPR000198">
    <property type="entry name" value="RhoGAP_dom"/>
</dbReference>
<dbReference type="InterPro" id="IPR000980">
    <property type="entry name" value="SH2"/>
</dbReference>
<dbReference type="InterPro" id="IPR036860">
    <property type="entry name" value="SH2_dom_sf"/>
</dbReference>
<dbReference type="InterPro" id="IPR036028">
    <property type="entry name" value="SH3-like_dom_sf"/>
</dbReference>
<dbReference type="InterPro" id="IPR001452">
    <property type="entry name" value="SH3_domain"/>
</dbReference>
<dbReference type="PANTHER" id="PTHR10155">
    <property type="entry name" value="PHOSPHATIDYLINOSITOL 3-KINASE REGULATORY SUBUNIT"/>
    <property type="match status" value="1"/>
</dbReference>
<dbReference type="PANTHER" id="PTHR10155:SF1">
    <property type="entry name" value="PHOSPHATIDYLINOSITOL 3-KINASE REGULATORY SUBUNIT BETA"/>
    <property type="match status" value="1"/>
</dbReference>
<dbReference type="Pfam" id="PF16454">
    <property type="entry name" value="PI3K_P85_iSH2"/>
    <property type="match status" value="1"/>
</dbReference>
<dbReference type="Pfam" id="PF00620">
    <property type="entry name" value="RhoGAP"/>
    <property type="match status" value="1"/>
</dbReference>
<dbReference type="Pfam" id="PF00017">
    <property type="entry name" value="SH2"/>
    <property type="match status" value="2"/>
</dbReference>
<dbReference type="PRINTS" id="PR00678">
    <property type="entry name" value="PI3KINASEP85"/>
</dbReference>
<dbReference type="PRINTS" id="PR00401">
    <property type="entry name" value="SH2DOMAIN"/>
</dbReference>
<dbReference type="SMART" id="SM00324">
    <property type="entry name" value="RhoGAP"/>
    <property type="match status" value="1"/>
</dbReference>
<dbReference type="SMART" id="SM00252">
    <property type="entry name" value="SH2"/>
    <property type="match status" value="2"/>
</dbReference>
<dbReference type="SMART" id="SM00326">
    <property type="entry name" value="SH3"/>
    <property type="match status" value="1"/>
</dbReference>
<dbReference type="SUPFAM" id="SSF48350">
    <property type="entry name" value="GTPase activation domain, GAP"/>
    <property type="match status" value="1"/>
</dbReference>
<dbReference type="SUPFAM" id="SSF55550">
    <property type="entry name" value="SH2 domain"/>
    <property type="match status" value="2"/>
</dbReference>
<dbReference type="SUPFAM" id="SSF50044">
    <property type="entry name" value="SH3-domain"/>
    <property type="match status" value="1"/>
</dbReference>
<dbReference type="PROSITE" id="PS50238">
    <property type="entry name" value="RHOGAP"/>
    <property type="match status" value="1"/>
</dbReference>
<dbReference type="PROSITE" id="PS50001">
    <property type="entry name" value="SH2"/>
    <property type="match status" value="2"/>
</dbReference>
<dbReference type="PROSITE" id="PS50002">
    <property type="entry name" value="SH3"/>
    <property type="match status" value="1"/>
</dbReference>
<comment type="function">
    <text evidence="26 31 33 49">Binds to activated (phosphorylated) protein-Tyr kinases, through its SH2 domain, and acts as an adapter, mediating the association of the p110 catalytic unit to the plasma membrane. Necessary for the insulin-stimulated increase in glucose uptake and glycogen synthesis in insulin-sensitive tissues. Plays an important role in signaling in response to FGFR1, FGFR2, FGFR3, FGFR4, KITLG/SCF, KIT, PDGFRA and PDGFRB. Likewise, plays a role in ITGB2 signaling (PubMed:17626883, PubMed:19805105, PubMed:7518429). Modulates the cellular response to ER stress by promoting nuclear translocation of XBP1 isoform 2 in a ER stress- and/or insulin-dependent manner during metabolic overloading in the liver and hence plays a role in glucose tolerance improvement (PubMed:20348923).</text>
</comment>
<comment type="subunit">
    <text evidence="2 3 4 9 10 11 13 14 15 16 17 18 21 22 23 28 29 30 31 32 33 34 36 39 44 46 47 48 50 51 52 53 54 55 56 58 59 60 61 62">Heterodimer of a regulatory subunit PIK3R1 and a p110 catalytic subunit (PIK3CA, PIK3CB or PIK3CD). Interacts (via SH2 domains) with CCDC88A/GIV (tyrosine-phosphorylated form); the interaction enables recruitment of PIK3R1 to the EGFR receptor, enhancing PI3K activity and cell migration (PubMed:21954290). Interacts (via SH2 domain) with CSF1R (tyrosine phosphorylated). Interacts with PIK3R2; the interaction is dissociated in an insulin-dependent manner (By similarity). Interacts with XBP1 isoform 2; the interaction is direct and induces translocation of XBP1 isoform 2 into the nucleus in a ER stress- and/or insulin-dependent but PI3K-independent manner (PubMed:20348923). Interacts with FER. Interacts (via SH2 domain) with TEK/TIE2 (tyrosine phosphorylated). Interacts with PTK2/FAK1 (By similarity). Interacts with phosphorylated TOM1L1. Interacts with phosphorylated LIME1 upon TCR and/or BCR activation. Interacts with SOCS7. Interacts with RUFY3. Interacts (via SH2 domain) with CSF1R (tyrosine phosphorylated). Interacts with LYN (via SH3 domain); this enhances enzyme activity (By similarity). Interacts with phosphorylated LAT, LAX1 and TRAT1 upon TCR activation. Interacts with CBLB. The SH2 domains interact with the YTHM motif of phosphorylated INSR in vitro. Also interacts with tyrosine-phosphorylated IGF1R in vitro. Interacts with CD28 and CD3Z upon T-cell activation. Interacts with IRS1, IRS2 and phosphorylated IRS4, as well as with NISCH and HCST (PubMed:8628286, PubMed:19109239). Interacts with FASLG, KIT and BCR. Interacts with AXL, FGFR1, FGFR2, FGFR3 and FGFR4 (phosphorylated). Interacts with FGR and HCK. Interacts with PDGFRA (tyrosine phosphorylated) and PDGFRB (tyrosine phosphorylated). Interacts with ERBB4 (phosphorylated). Interacts with NTRK1 (phosphorylated upon ligand-binding). Interacts with FAM83B; activates the PI3K/AKT signaling cascade (PubMed:23676467). Interacts with APPL1 and APPL2 (By similarity). Interacts with SRC (PubMed:28903391). Interacts with ALOX5; this interaction bridges ALOX5 with CD40 after CD40 ligation in B cells and leads to the production of reactive oxygen species (ROS) (PubMed:21200133). Interacts with TYK2 (PubMed:10995743). Interacts with nephrin NPHN1; the interaction is reduced by high glucose levels (PubMed:28955049). Interacts with CASP8 (phosphorylated on Tyr-380) (PubMed:27109099). Interacts with CD28 (PubMed:7568038). Interacts with ICOS (PubMed:30523347).</text>
</comment>
<comment type="subunit">
    <text evidence="19">(Microbial infection) Interacts with HIV-1 Nef to activate the Nef associated p21-activated kinase (PAK). This interaction depends on the C-terminus of both proteins and leads to increased production of HIV.</text>
</comment>
<comment type="subunit">
    <text evidence="20">(Microbial infection) Interacts with HCV NS5A.</text>
</comment>
<comment type="subunit">
    <text evidence="35">(Microbial infection) Interacts with herpes simplex virus 1 UL46; this interaction activates the PI3K/AKT pathway.</text>
</comment>
<comment type="subunit">
    <text evidence="38">(Microbial infection) Interacts with herpes simplex virus 1 UL46 and varicella virus ORF12; this interaction activates the PI3K/AKT pathway.</text>
</comment>
<comment type="interaction">
    <interactant intactId="EBI-79464">
        <id>P27986</id>
    </interactant>
    <interactant intactId="EBI-375446">
        <id>Q8IZP0</id>
        <label>ABI1</label>
    </interactant>
    <organismsDiffer>false</organismsDiffer>
    <experiments>8</experiments>
</comment>
<comment type="interaction">
    <interactant intactId="EBI-79464">
        <id>P27986</id>
    </interactant>
    <interactant intactId="EBI-1102694">
        <id>P42684</id>
        <label>ABL2</label>
    </interactant>
    <organismsDiffer>false</organismsDiffer>
    <experiments>2</experiments>
</comment>
<comment type="interaction">
    <interactant intactId="EBI-79464">
        <id>P27986</id>
    </interactant>
    <interactant intactId="EBI-608057">
        <id>P10275</id>
        <label>AR</label>
    </interactant>
    <organismsDiffer>false</organismsDiffer>
    <experiments>5</experiments>
</comment>
<comment type="interaction">
    <interactant intactId="EBI-79464">
        <id>P27986</id>
    </interactant>
    <interactant intactId="EBI-2850927">
        <id>P30530</id>
        <label>AXL</label>
    </interactant>
    <organismsDiffer>false</organismsDiffer>
    <experiments>3</experiments>
</comment>
<comment type="interaction">
    <interactant intactId="EBI-79464">
        <id>P27986</id>
    </interactant>
    <interactant intactId="EBI-518228">
        <id>P22681</id>
        <label>CBL</label>
    </interactant>
    <organismsDiffer>false</organismsDiffer>
    <experiments>5</experiments>
</comment>
<comment type="interaction">
    <interactant intactId="EBI-79464">
        <id>P27986</id>
    </interactant>
    <interactant intactId="EBI-4314301">
        <id>P10747</id>
        <label>CD28</label>
    </interactant>
    <organismsDiffer>false</organismsDiffer>
    <experiments>10</experiments>
</comment>
<comment type="interaction">
    <interactant intactId="EBI-79464">
        <id>P27986</id>
    </interactant>
    <interactant intactId="EBI-1020839">
        <id>Q13111</id>
        <label>CHAF1A</label>
    </interactant>
    <organismsDiffer>false</organismsDiffer>
    <experiments>2</experiments>
</comment>
<comment type="interaction">
    <interactant intactId="EBI-79464">
        <id>P27986</id>
    </interactant>
    <interactant intactId="EBI-7689652">
        <id>Q8IY22</id>
        <label>CMIP</label>
    </interactant>
    <organismsDiffer>false</organismsDiffer>
    <experiments>2</experiments>
</comment>
<comment type="interaction">
    <interactant intactId="EBI-79464">
        <id>P27986</id>
    </interactant>
    <interactant intactId="EBI-1030991">
        <id>P16410</id>
        <label>CTLA4</label>
    </interactant>
    <organismsDiffer>false</organismsDiffer>
    <experiments>3</experiments>
</comment>
<comment type="interaction">
    <interactant intactId="EBI-79464">
        <id>P27986</id>
    </interactant>
    <interactant intactId="EBI-722139">
        <id>Q9Y2H0</id>
        <label>DLGAP4</label>
    </interactant>
    <organismsDiffer>false</organismsDiffer>
    <experiments>2</experiments>
</comment>
<comment type="interaction">
    <interactant intactId="EBI-79464">
        <id>P27986</id>
    </interactant>
    <interactant intactId="EBI-297353">
        <id>P00533</id>
        <label>EGFR</label>
    </interactant>
    <organismsDiffer>false</organismsDiffer>
    <experiments>6</experiments>
</comment>
<comment type="interaction">
    <interactant intactId="EBI-79464">
        <id>P27986</id>
    </interactant>
    <interactant intactId="EBI-1758534">
        <id>P41970</id>
        <label>ELK3</label>
    </interactant>
    <organismsDiffer>false</organismsDiffer>
    <experiments>2</experiments>
</comment>
<comment type="interaction">
    <interactant intactId="EBI-79464">
        <id>P27986</id>
    </interactant>
    <interactant intactId="EBI-641062">
        <id>P04626</id>
        <label>ERBB2</label>
    </interactant>
    <organismsDiffer>false</organismsDiffer>
    <experiments>12</experiments>
</comment>
<comment type="interaction">
    <interactant intactId="EBI-79464">
        <id>P27986</id>
    </interactant>
    <interactant intactId="EBI-720706">
        <id>P21860</id>
        <label>ERBB3</label>
    </interactant>
    <organismsDiffer>false</organismsDiffer>
    <experiments>41</experiments>
</comment>
<comment type="interaction">
    <interactant intactId="EBI-79464">
        <id>P27986</id>
    </interactant>
    <interactant intactId="EBI-495538">
        <id>P48023</id>
        <label>FASLG</label>
    </interactant>
    <organismsDiffer>false</organismsDiffer>
    <experiments>2</experiments>
</comment>
<comment type="interaction">
    <interactant intactId="EBI-79464">
        <id>P27986</id>
    </interactant>
    <interactant intactId="EBI-1028277">
        <id>P11362</id>
        <label>FGFR1</label>
    </interactant>
    <organismsDiffer>false</organismsDiffer>
    <experiments>6</experiments>
</comment>
<comment type="interaction">
    <interactant intactId="EBI-79464">
        <id>P27986</id>
    </interactant>
    <interactant intactId="EBI-1026718">
        <id>P17948</id>
        <label>FLT1</label>
    </interactant>
    <organismsDiffer>false</organismsDiffer>
    <experiments>3</experiments>
</comment>
<comment type="interaction">
    <interactant intactId="EBI-79464">
        <id>P27986</id>
    </interactant>
    <interactant intactId="EBI-3946257">
        <id>P36888</id>
        <label>FLT3</label>
    </interactant>
    <organismsDiffer>false</organismsDiffer>
    <experiments>2</experiments>
</comment>
<comment type="interaction">
    <interactant intactId="EBI-79464">
        <id>P27986</id>
    </interactant>
    <interactant intactId="EBI-517684">
        <id>Q13480</id>
        <label>GAB1</label>
    </interactant>
    <organismsDiffer>false</organismsDiffer>
    <experiments>33</experiments>
</comment>
<comment type="interaction">
    <interactant intactId="EBI-79464">
        <id>P27986</id>
    </interactant>
    <interactant intactId="EBI-80275">
        <id>Q13322</id>
        <label>GRB10</label>
    </interactant>
    <organismsDiffer>false</organismsDiffer>
    <experiments>2</experiments>
</comment>
<comment type="interaction">
    <interactant intactId="EBI-79464">
        <id>P27986</id>
    </interactant>
    <interactant intactId="EBI-401755">
        <id>P62993</id>
        <label>GRB2</label>
    </interactant>
    <organismsDiffer>false</organismsDiffer>
    <experiments>4</experiments>
</comment>
<comment type="interaction">
    <interactant intactId="EBI-79464">
        <id>P27986</id>
    </interactant>
    <interactant intactId="EBI-466029">
        <id>P42858</id>
        <label>HTT</label>
    </interactant>
    <organismsDiffer>false</organismsDiffer>
    <experiments>7</experiments>
</comment>
<comment type="interaction">
    <interactant intactId="EBI-79464">
        <id>P27986</id>
    </interactant>
    <interactant intactId="EBI-3922712">
        <id>Q9Y6W8</id>
        <label>ICOS</label>
    </interactant>
    <organismsDiffer>false</organismsDiffer>
    <experiments>5</experiments>
</comment>
<comment type="interaction">
    <interactant intactId="EBI-79464">
        <id>P27986</id>
    </interactant>
    <interactant intactId="EBI-475981">
        <id>P08069</id>
        <label>IGF1R</label>
    </interactant>
    <organismsDiffer>false</organismsDiffer>
    <experiments>6</experiments>
</comment>
<comment type="interaction">
    <interactant intactId="EBI-79464">
        <id>P27986</id>
    </interactant>
    <interactant intactId="EBI-475899">
        <id>P06213</id>
        <label>INSR</label>
    </interactant>
    <organismsDiffer>false</organismsDiffer>
    <experiments>5</experiments>
</comment>
<comment type="interaction">
    <interactant intactId="EBI-79464">
        <id>P27986</id>
    </interactant>
    <interactant intactId="EBI-517592">
        <id>P35568</id>
        <label>IRS1</label>
    </interactant>
    <organismsDiffer>false</organismsDiffer>
    <experiments>12</experiments>
</comment>
<comment type="interaction">
    <interactant intactId="EBI-79464">
        <id>P27986</id>
    </interactant>
    <interactant intactId="EBI-1049582">
        <id>Q9Y4H2</id>
        <label>IRS2</label>
    </interactant>
    <organismsDiffer>false</organismsDiffer>
    <experiments>3</experiments>
</comment>
<comment type="interaction">
    <interactant intactId="EBI-79464">
        <id>P27986</id>
    </interactant>
    <interactant intactId="EBI-1379503">
        <id>P10721</id>
        <label>KIT</label>
    </interactant>
    <organismsDiffer>false</organismsDiffer>
    <experiments>19</experiments>
</comment>
<comment type="interaction">
    <interactant intactId="EBI-79464">
        <id>P27986</id>
    </interactant>
    <interactant intactId="EBI-3267286">
        <id>Q86VI4-3</id>
        <label>LAPTM4B</label>
    </interactant>
    <organismsDiffer>false</organismsDiffer>
    <experiments>2</experiments>
</comment>
<comment type="interaction">
    <interactant intactId="EBI-79464">
        <id>P27986</id>
    </interactant>
    <interactant intactId="EBI-1222766">
        <id>O43561</id>
        <label>LAT</label>
    </interactant>
    <organismsDiffer>false</organismsDiffer>
    <experiments>4</experiments>
</comment>
<comment type="interaction">
    <interactant intactId="EBI-79464">
        <id>P27986</id>
    </interactant>
    <interactant intactId="EBI-6596163">
        <id>P29376</id>
        <label>LTK</label>
    </interactant>
    <organismsDiffer>false</organismsDiffer>
    <experiments>3</experiments>
</comment>
<comment type="interaction">
    <interactant intactId="EBI-79464">
        <id>P27986</id>
    </interactant>
    <interactant intactId="EBI-881">
        <id>Q92918</id>
        <label>MAP4K1</label>
    </interactant>
    <organismsDiffer>false</organismsDiffer>
    <experiments>2</experiments>
</comment>
<comment type="interaction">
    <interactant intactId="EBI-79464">
        <id>P27986</id>
    </interactant>
    <interactant intactId="EBI-286483">
        <id>P45983</id>
        <label>MAPK8</label>
    </interactant>
    <organismsDiffer>false</organismsDiffer>
    <experiments>6</experiments>
</comment>
<comment type="interaction">
    <interactant intactId="EBI-79464">
        <id>P27986</id>
    </interactant>
    <interactant intactId="EBI-1039152">
        <id>P08581</id>
        <label>MET</label>
    </interactant>
    <organismsDiffer>false</organismsDiffer>
    <experiments>6</experiments>
</comment>
<comment type="interaction">
    <interactant intactId="EBI-79464">
        <id>P27986</id>
    </interactant>
    <interactant intactId="EBI-347721">
        <id>Q8WX92</id>
        <label>NELFB</label>
    </interactant>
    <organismsDiffer>false</organismsDiffer>
    <experiments>2</experiments>
</comment>
<comment type="interaction">
    <interactant intactId="EBI-79464">
        <id>P27986</id>
    </interactant>
    <interactant intactId="EBI-1028226">
        <id>P04629</id>
        <label>NTRK1</label>
    </interactant>
    <organismsDiffer>false</organismsDiffer>
    <experiments>4</experiments>
</comment>
<comment type="interaction">
    <interactant intactId="EBI-79464">
        <id>P27986</id>
    </interactant>
    <interactant intactId="EBI-641237">
        <id>P09619</id>
        <label>PDGFRB</label>
    </interactant>
    <organismsDiffer>false</organismsDiffer>
    <experiments>21</experiments>
</comment>
<comment type="interaction">
    <interactant intactId="EBI-79464">
        <id>P27986</id>
    </interactant>
    <interactant intactId="EBI-2116585">
        <id>P42336</id>
        <label>PIK3CA</label>
    </interactant>
    <organismsDiffer>false</organismsDiffer>
    <experiments>64</experiments>
</comment>
<comment type="interaction">
    <interactant intactId="EBI-79464">
        <id>P27986</id>
    </interactant>
    <interactant intactId="EBI-2609540">
        <id>P42338</id>
        <label>PIK3CB</label>
    </interactant>
    <organismsDiffer>false</organismsDiffer>
    <experiments>6</experiments>
</comment>
<comment type="interaction">
    <interactant intactId="EBI-79464">
        <id>P27986</id>
    </interactant>
    <interactant intactId="EBI-718309">
        <id>O00329</id>
        <label>PIK3CD</label>
    </interactant>
    <organismsDiffer>false</organismsDiffer>
    <experiments>9</experiments>
</comment>
<comment type="interaction">
    <interactant intactId="EBI-79464">
        <id>P27986</id>
    </interactant>
    <interactant intactId="EBI-346930">
        <id>O00459</id>
        <label>PIK3R2</label>
    </interactant>
    <organismsDiffer>false</organismsDiffer>
    <experiments>4</experiments>
</comment>
<comment type="interaction">
    <interactant intactId="EBI-79464">
        <id>P27986</id>
    </interactant>
    <interactant intactId="EBI-976876">
        <id>Q13905</id>
        <label>RAPGEF1</label>
    </interactant>
    <organismsDiffer>false</organismsDiffer>
    <experiments>2</experiments>
</comment>
<comment type="interaction">
    <interactant intactId="EBI-79464">
        <id>P27986</id>
    </interactant>
    <interactant intactId="EBI-356849">
        <id>P26373</id>
        <label>RPL13</label>
    </interactant>
    <organismsDiffer>false</organismsDiffer>
    <experiments>2</experiments>
</comment>
<comment type="interaction">
    <interactant intactId="EBI-79464">
        <id>P27986</id>
    </interactant>
    <interactant intactId="EBI-78598">
        <id>P19793</id>
        <label>RXRA</label>
    </interactant>
    <organismsDiffer>false</organismsDiffer>
    <experiments>8</experiments>
</comment>
<comment type="interaction">
    <interactant intactId="EBI-79464">
        <id>P27986</id>
    </interactant>
    <interactant intactId="EBI-1570571">
        <id>Q9UPX8</id>
        <label>SHANK2</label>
    </interactant>
    <organismsDiffer>false</organismsDiffer>
    <experiments>2</experiments>
</comment>
<comment type="interaction">
    <interactant intactId="EBI-79464">
        <id>P27986</id>
    </interactant>
    <interactant intactId="EBI-1181664">
        <id>Q9H0K1</id>
        <label>SIK2</label>
    </interactant>
    <organismsDiffer>false</organismsDiffer>
    <experiments>7</experiments>
</comment>
<comment type="interaction">
    <interactant intactId="EBI-79464">
        <id>P27986</id>
    </interactant>
    <interactant intactId="EBI-1802965">
        <id>Q96EB6</id>
        <label>SIRT1</label>
    </interactant>
    <organismsDiffer>false</organismsDiffer>
    <experiments>3</experiments>
</comment>
<comment type="interaction">
    <interactant intactId="EBI-79464">
        <id>P27986</id>
    </interactant>
    <interactant intactId="EBI-297487">
        <id>Q07889</id>
        <label>SOS1</label>
    </interactant>
    <organismsDiffer>false</organismsDiffer>
    <experiments>3</experiments>
</comment>
<comment type="interaction">
    <interactant intactId="EBI-79464">
        <id>P27986</id>
    </interactant>
    <interactant intactId="EBI-621482">
        <id>P12931</id>
        <label>SRC</label>
    </interactant>
    <organismsDiffer>false</organismsDiffer>
    <experiments>7</experiments>
</comment>
<comment type="interaction">
    <interactant intactId="EBI-79464">
        <id>P27986</id>
    </interactant>
    <interactant intactId="EBI-6266898">
        <id>P30874</id>
        <label>SSTR2</label>
    </interactant>
    <organismsDiffer>false</organismsDiffer>
    <experiments>5</experiments>
</comment>
<comment type="interaction">
    <interactant intactId="EBI-79464">
        <id>P27986</id>
    </interactant>
    <interactant intactId="EBI-528644">
        <id>P58753</id>
        <label>TIRAP</label>
    </interactant>
    <organismsDiffer>false</organismsDiffer>
    <experiments>3</experiments>
</comment>
<comment type="interaction">
    <interactant intactId="EBI-79464">
        <id>P27986</id>
    </interactant>
    <interactant intactId="EBI-6116630">
        <id>O15455</id>
        <label>TLR3</label>
    </interactant>
    <organismsDiffer>false</organismsDiffer>
    <experiments>2</experiments>
</comment>
<comment type="interaction">
    <interactant intactId="EBI-79464">
        <id>P27986</id>
    </interactant>
    <interactant intactId="EBI-1761369">
        <id>Q15661</id>
        <label>TPSAB1</label>
    </interactant>
    <organismsDiffer>false</organismsDiffer>
    <experiments>2</experiments>
</comment>
<comment type="interaction">
    <interactant intactId="EBI-79464">
        <id>P27986</id>
    </interactant>
    <interactant intactId="EBI-1037322">
        <id>Q9ULW0</id>
        <label>TPX2</label>
    </interactant>
    <organismsDiffer>false</organismsDiffer>
    <experiments>2</experiments>
</comment>
<comment type="interaction">
    <interactant intactId="EBI-79464">
        <id>P27986</id>
    </interactant>
    <interactant intactId="EBI-297568">
        <id>Q9UKW4</id>
        <label>VAV3</label>
    </interactant>
    <organismsDiffer>false</organismsDiffer>
    <experiments>2</experiments>
</comment>
<comment type="interaction">
    <interactant intactId="EBI-79464">
        <id>P27986</id>
    </interactant>
    <interactant intactId="EBI-520230">
        <id>P35570</id>
        <label>Irs1</label>
    </interactant>
    <organismsDiffer>true</organismsDiffer>
    <experiments>2</experiments>
</comment>
<comment type="interaction">
    <interactant intactId="EBI-79464">
        <id>P27986</id>
    </interactant>
    <interactant intactId="EBI-2547442">
        <id>P03496</id>
        <label>NS</label>
    </interactant>
    <organismsDiffer>true</organismsDiffer>
    <experiments>6</experiments>
</comment>
<comment type="interaction">
    <interactant intactId="EBI-79464">
        <id>P27986</id>
    </interactant>
    <interactant intactId="EBI-7447489">
        <id>Q6PFX7</id>
        <label>Nyap1</label>
    </interactant>
    <organismsDiffer>true</organismsDiffer>
    <experiments>4</experiments>
</comment>
<comment type="interaction">
    <interactant intactId="EBI-79464">
        <id>P27986</id>
    </interactant>
    <interactant intactId="EBI-7447598">
        <id>Q8BM65-4</id>
        <label>Nyap2</label>
    </interactant>
    <organismsDiffer>true</organismsDiffer>
    <experiments>3</experiments>
</comment>
<comment type="interaction">
    <interactant intactId="EBI-79464">
        <id>P27986</id>
    </interactant>
    <interactant intactId="EBI-1776808">
        <id>Q99152</id>
        <label>VP3</label>
    </interactant>
    <organismsDiffer>true</organismsDiffer>
    <experiments>3</experiments>
</comment>
<comment type="interaction">
    <interactant intactId="EBI-79464">
        <id>P27986</id>
    </interactant>
    <interactant intactId="EBI-16746307">
        <id>P0DOJ9</id>
    </interactant>
    <organismsDiffer>true</organismsDiffer>
    <experiments>2</experiments>
</comment>
<comment type="interaction">
    <interactant intactId="EBI-9090282">
        <id>P27986-2</id>
    </interactant>
    <interactant intactId="EBI-640741">
        <id>P01023</id>
        <label>A2M</label>
    </interactant>
    <organismsDiffer>false</organismsDiffer>
    <experiments>3</experiments>
</comment>
<comment type="interaction">
    <interactant intactId="EBI-9090282">
        <id>P27986-2</id>
    </interactant>
    <interactant intactId="EBI-372428">
        <id>Q9NY61</id>
        <label>AATF</label>
    </interactant>
    <organismsDiffer>false</organismsDiffer>
    <experiments>3</experiments>
</comment>
<comment type="interaction">
    <interactant intactId="EBI-9090282">
        <id>P27986-2</id>
    </interactant>
    <interactant intactId="EBI-286427">
        <id>O95704</id>
        <label>APBB3</label>
    </interactant>
    <organismsDiffer>false</organismsDiffer>
    <experiments>3</experiments>
</comment>
<comment type="interaction">
    <interactant intactId="EBI-9090282">
        <id>P27986-2</id>
    </interactant>
    <interactant intactId="EBI-77613">
        <id>P05067</id>
        <label>APP</label>
    </interactant>
    <organismsDiffer>false</organismsDiffer>
    <experiments>3</experiments>
</comment>
<comment type="interaction">
    <interactant intactId="EBI-9090282">
        <id>P27986-2</id>
    </interactant>
    <interactant intactId="EBI-2105445">
        <id>P51451</id>
        <label>BLK</label>
    </interactant>
    <organismsDiffer>false</organismsDiffer>
    <experiments>3</experiments>
</comment>
<comment type="interaction">
    <interactant intactId="EBI-9090282">
        <id>P27986-2</id>
    </interactant>
    <interactant intactId="EBI-1383687">
        <id>Q9UQM7</id>
        <label>CAMK2A</label>
    </interactant>
    <organismsDiffer>false</organismsDiffer>
    <experiments>3</experiments>
</comment>
<comment type="interaction">
    <interactant intactId="EBI-9090282">
        <id>P27986-2</id>
    </interactant>
    <interactant intactId="EBI-12248206">
        <id>P29466-3</id>
        <label>CASP1</label>
    </interactant>
    <organismsDiffer>false</organismsDiffer>
    <experiments>3</experiments>
</comment>
<comment type="interaction">
    <interactant intactId="EBI-9090282">
        <id>P27986-2</id>
    </interactant>
    <interactant intactId="EBI-523958">
        <id>P55210</id>
        <label>CASP7</label>
    </interactant>
    <organismsDiffer>false</organismsDiffer>
    <experiments>3</experiments>
</comment>
<comment type="interaction">
    <interactant intactId="EBI-9090282">
        <id>P27986-2</id>
    </interactant>
    <interactant intactId="EBI-444308">
        <id>P06493</id>
        <label>CDK1</label>
    </interactant>
    <organismsDiffer>false</organismsDiffer>
    <experiments>3</experiments>
</comment>
<comment type="interaction">
    <interactant intactId="EBI-9090282">
        <id>P27986-2</id>
    </interactant>
    <interactant intactId="EBI-715032">
        <id>P20674</id>
        <label>COX5A</label>
    </interactant>
    <organismsDiffer>false</organismsDiffer>
    <experiments>3</experiments>
</comment>
<comment type="interaction">
    <interactant intactId="EBI-9090282">
        <id>P27986-2</id>
    </interactant>
    <interactant intactId="EBI-8589586">
        <id>P09172</id>
        <label>DBH</label>
    </interactant>
    <organismsDiffer>false</organismsDiffer>
    <experiments>3</experiments>
</comment>
<comment type="interaction">
    <interactant intactId="EBI-9090282">
        <id>P27986-2</id>
    </interactant>
    <interactant intactId="EBI-10968534">
        <id>P50570-2</id>
        <label>DNM2</label>
    </interactant>
    <organismsDiffer>false</organismsDiffer>
    <experiments>3</experiments>
</comment>
<comment type="interaction">
    <interactant intactId="EBI-9090282">
        <id>P27986-2</id>
    </interactant>
    <interactant intactId="EBI-852851">
        <id>P01100</id>
        <label>FOS</label>
    </interactant>
    <organismsDiffer>false</organismsDiffer>
    <experiments>3</experiments>
</comment>
<comment type="interaction">
    <interactant intactId="EBI-9090282">
        <id>P27986-2</id>
    </interactant>
    <interactant intactId="EBI-11110431">
        <id>Q8TB36</id>
        <label>GDAP1</label>
    </interactant>
    <organismsDiffer>false</organismsDiffer>
    <experiments>3</experiments>
</comment>
<comment type="interaction">
    <interactant intactId="EBI-9090282">
        <id>P27986-2</id>
    </interactant>
    <interactant intactId="EBI-744302">
        <id>P14136</id>
        <label>GFAP</label>
    </interactant>
    <organismsDiffer>false</organismsDiffer>
    <experiments>3</experiments>
</comment>
<comment type="interaction">
    <interactant intactId="EBI-9090282">
        <id>P27986-2</id>
    </interactant>
    <interactant intactId="EBI-401755">
        <id>P62993</id>
        <label>GRB2</label>
    </interactant>
    <organismsDiffer>false</organismsDiffer>
    <experiments>3</experiments>
</comment>
<comment type="interaction">
    <interactant intactId="EBI-9090282">
        <id>P27986-2</id>
    </interactant>
    <interactant intactId="EBI-466029">
        <id>P42858</id>
        <label>HTT</label>
    </interactant>
    <organismsDiffer>false</organismsDiffer>
    <experiments>18</experiments>
</comment>
<comment type="interaction">
    <interactant intactId="EBI-9090282">
        <id>P27986-2</id>
    </interactant>
    <interactant intactId="EBI-517592">
        <id>P35568</id>
        <label>IRS1</label>
    </interactant>
    <organismsDiffer>false</organismsDiffer>
    <experiments>3</experiments>
</comment>
<comment type="interaction">
    <interactant intactId="EBI-9090282">
        <id>P27986-2</id>
    </interactant>
    <interactant intactId="EBI-703066">
        <id>P05556</id>
        <label>ITGB1</label>
    </interactant>
    <organismsDiffer>false</organismsDiffer>
    <experiments>3</experiments>
</comment>
<comment type="interaction">
    <interactant intactId="EBI-9090282">
        <id>P27986-2</id>
    </interactant>
    <interactant intactId="EBI-852823">
        <id>P05412</id>
        <label>JUN</label>
    </interactant>
    <organismsDiffer>false</organismsDiffer>
    <experiments>3</experiments>
</comment>
<comment type="interaction">
    <interactant intactId="EBI-9090282">
        <id>P27986-2</id>
    </interactant>
    <interactant intactId="EBI-79452">
        <id>P07948</id>
        <label>LYN</label>
    </interactant>
    <organismsDiffer>false</organismsDiffer>
    <experiments>3</experiments>
</comment>
<comment type="interaction">
    <interactant intactId="EBI-9090282">
        <id>P27986-2</id>
    </interactant>
    <interactant intactId="EBI-12345753">
        <id>Q13387-4</id>
        <label>MAPK8IP2</label>
    </interactant>
    <organismsDiffer>false</organismsDiffer>
    <experiments>3</experiments>
</comment>
<comment type="interaction">
    <interactant intactId="EBI-9090282">
        <id>P27986-2</id>
    </interactant>
    <interactant intactId="EBI-747693">
        <id>P41227</id>
        <label>NAA10</label>
    </interactant>
    <organismsDiffer>false</organismsDiffer>
    <experiments>3</experiments>
</comment>
<comment type="interaction">
    <interactant intactId="EBI-9090282">
        <id>P27986-2</id>
    </interactant>
    <interactant intactId="EBI-721993">
        <id>P01111</id>
        <label>NRAS</label>
    </interactant>
    <organismsDiffer>false</organismsDiffer>
    <experiments>3</experiments>
</comment>
<comment type="interaction">
    <interactant intactId="EBI-9090282">
        <id>P27986-2</id>
    </interactant>
    <interactant intactId="EBI-945925">
        <id>Q9Y6R0</id>
        <label>NUMBL</label>
    </interactant>
    <organismsDiffer>false</organismsDiffer>
    <experiments>3</experiments>
</comment>
<comment type="interaction">
    <interactant intactId="EBI-9090282">
        <id>P27986-2</id>
    </interactant>
    <interactant intactId="EBI-2116585">
        <id>P42336</id>
        <label>PIK3CA</label>
    </interactant>
    <organismsDiffer>false</organismsDiffer>
    <experiments>3</experiments>
</comment>
<comment type="interaction">
    <interactant intactId="EBI-9090282">
        <id>P27986-2</id>
    </interactant>
    <interactant intactId="EBI-2609540">
        <id>P42338</id>
        <label>PIK3CB</label>
    </interactant>
    <organismsDiffer>false</organismsDiffer>
    <experiments>6</experiments>
</comment>
<comment type="interaction">
    <interactant intactId="EBI-9090282">
        <id>P27986-2</id>
    </interactant>
    <interactant intactId="EBI-718309">
        <id>O00329</id>
        <label>PIK3CD</label>
    </interactant>
    <organismsDiffer>false</organismsDiffer>
    <experiments>3</experiments>
</comment>
<comment type="interaction">
    <interactant intactId="EBI-9090282">
        <id>P27986-2</id>
    </interactant>
    <interactant intactId="EBI-476586">
        <id>P17612</id>
        <label>PRKACA</label>
    </interactant>
    <organismsDiffer>false</organismsDiffer>
    <experiments>3</experiments>
</comment>
<comment type="interaction">
    <interactant intactId="EBI-9090282">
        <id>P27986-2</id>
    </interactant>
    <interactant intactId="EBI-2010251">
        <id>P49810</id>
        <label>PSEN2</label>
    </interactant>
    <organismsDiffer>false</organismsDiffer>
    <experiments>3</experiments>
</comment>
<comment type="interaction">
    <interactant intactId="EBI-9090282">
        <id>P27986-2</id>
    </interactant>
    <interactant intactId="EBI-413628">
        <id>P63000</id>
        <label>RAC1</label>
    </interactant>
    <organismsDiffer>false</organismsDiffer>
    <experiments>3</experiments>
</comment>
<comment type="interaction">
    <interactant intactId="EBI-9090282">
        <id>P27986-2</id>
    </interactant>
    <interactant intactId="EBI-1046616">
        <id>P51812</id>
        <label>RPS6KA3</label>
    </interactant>
    <organismsDiffer>false</organismsDiffer>
    <experiments>3</experiments>
</comment>
<comment type="interaction">
    <interactant intactId="EBI-9090282">
        <id>P27986-2</id>
    </interactant>
    <interactant intactId="EBI-25882353">
        <id>P23443-4</id>
        <label>RPS6KB1</label>
    </interactant>
    <organismsDiffer>false</organismsDiffer>
    <experiments>3</experiments>
</comment>
<comment type="interaction">
    <interactant intactId="EBI-9090282">
        <id>P27986-2</id>
    </interactant>
    <interactant intactId="EBI-1172957">
        <id>P34741</id>
        <label>SDC2</label>
    </interactant>
    <organismsDiffer>false</organismsDiffer>
    <experiments>3</experiments>
</comment>
<comment type="interaction">
    <interactant intactId="EBI-9090282">
        <id>P27986-2</id>
    </interactant>
    <interactant intactId="EBI-490630">
        <id>Q9NP31</id>
        <label>SH2D2A</label>
    </interactant>
    <organismsDiffer>false</organismsDiffer>
    <experiments>3</experiments>
</comment>
<comment type="interaction">
    <interactant intactId="EBI-9090282">
        <id>P27986-2</id>
    </interactant>
    <interactant intactId="EBI-347161">
        <id>P84022</id>
        <label>SMAD3</label>
    </interactant>
    <organismsDiffer>false</organismsDiffer>
    <experiments>3</experiments>
</comment>
<comment type="interaction">
    <interactant intactId="EBI-9090282">
        <id>P27986-2</id>
    </interactant>
    <interactant intactId="EBI-621482">
        <id>P12931</id>
        <label>SRC</label>
    </interactant>
    <organismsDiffer>false</organismsDiffer>
    <experiments>3</experiments>
</comment>
<comment type="interaction">
    <interactant intactId="EBI-9090282">
        <id>P27986-2</id>
    </interactant>
    <interactant intactId="EBI-357085">
        <id>Q9UNE7</id>
        <label>STUB1</label>
    </interactant>
    <organismsDiffer>false</organismsDiffer>
    <experiments>3</experiments>
</comment>
<comment type="interaction">
    <interactant intactId="EBI-9090282">
        <id>P27986-2</id>
    </interactant>
    <interactant intactId="EBI-12691451">
        <id>Q15583-2</id>
        <label>TGIF1</label>
    </interactant>
    <organismsDiffer>false</organismsDiffer>
    <experiments>3</experiments>
</comment>
<comment type="interaction">
    <interactant intactId="EBI-9090282">
        <id>P27986-2</id>
    </interactant>
    <interactant intactId="EBI-12117154">
        <id>O60784-2</id>
        <label>TOM1</label>
    </interactant>
    <organismsDiffer>false</organismsDiffer>
    <experiments>3</experiments>
</comment>
<comment type="interaction">
    <interactant intactId="EBI-9090282">
        <id>P27986-2</id>
    </interactant>
    <interactant intactId="EBI-25847109">
        <id>O14656-2</id>
        <label>TOR1A</label>
    </interactant>
    <organismsDiffer>false</organismsDiffer>
    <experiments>3</experiments>
</comment>
<comment type="interaction">
    <interactant intactId="EBI-9090282">
        <id>P27986-2</id>
    </interactant>
    <interactant intactId="EBI-711909">
        <id>P02766</id>
        <label>TTR</label>
    </interactant>
    <organismsDiffer>false</organismsDiffer>
    <experiments>3</experiments>
</comment>
<comment type="interaction">
    <interactant intactId="EBI-9090282">
        <id>P27986-2</id>
    </interactant>
    <interactant intactId="EBI-7877438">
        <id>P42681</id>
        <label>TXK</label>
    </interactant>
    <organismsDiffer>false</organismsDiffer>
    <experiments>3</experiments>
</comment>
<comment type="interaction">
    <interactant intactId="EBI-9090282">
        <id>P27986-2</id>
    </interactant>
    <interactant intactId="EBI-1051028">
        <id>P60604</id>
        <label>UBE2G2</label>
    </interactant>
    <organismsDiffer>false</organismsDiffer>
    <experiments>3</experiments>
</comment>
<comment type="interaction">
    <interactant intactId="EBI-9090282">
        <id>P27986-2</id>
    </interactant>
    <interactant intactId="EBI-11141397">
        <id>Q9UBQ0-2</id>
        <label>VPS29</label>
    </interactant>
    <organismsDiffer>false</organismsDiffer>
    <experiments>3</experiments>
</comment>
<comment type="interaction">
    <interactant intactId="EBI-9090282">
        <id>P27986-2</id>
    </interactant>
    <interactant intactId="EBI-720609">
        <id>O76024</id>
        <label>WFS1</label>
    </interactant>
    <organismsDiffer>false</organismsDiffer>
    <experiments>3</experiments>
</comment>
<comment type="interaction">
    <interactant intactId="EBI-9090282">
        <id>P27986-2</id>
    </interactant>
    <interactant intactId="EBI-524753">
        <id>Q8IUH5</id>
        <label>ZDHHC17</label>
    </interactant>
    <organismsDiffer>false</organismsDiffer>
    <experiments>2</experiments>
</comment>
<comment type="alternative products">
    <event type="alternative splicing"/>
    <isoform>
        <id>P27986-1</id>
        <name>1</name>
        <sequence type="displayed"/>
    </isoform>
    <isoform>
        <id>P27986-2</id>
        <name>2</name>
        <name>AS53</name>
        <sequence type="described" ref="VSP_021842 VSP_021843"/>
    </isoform>
    <isoform>
        <id>P27986-3</id>
        <name>3</name>
        <name>p46</name>
        <sequence type="described" ref="VSP_021841 VSP_021844"/>
    </isoform>
    <isoform>
        <id>P27986-4</id>
        <name>4</name>
        <name>p85I</name>
        <sequence type="described" ref="VSP_021845"/>
    </isoform>
    <isoform>
        <id>P27986-5</id>
        <name>5</name>
        <sequence type="described" ref="VSP_045903"/>
    </isoform>
</comment>
<comment type="tissue specificity">
    <text evidence="55">Isoform 2 is expressed in skeletal muscle and brain, and at lower levels in kidney and cardiac muscle. Isoform 2 and isoform 4 are present in skeletal muscle (at protein level).</text>
</comment>
<comment type="domain">
    <text>The SH3 domain mediates the binding to CBLB, and to HIV-1 Nef.</text>
</comment>
<comment type="PTM">
    <text evidence="15 16">Polyubiquitinated in T-cells by CBLB; which does not promote proteasomal degradation but impairs association with CD28 and CD3Z upon T-cell activation.</text>
</comment>
<comment type="PTM">
    <text evidence="45">In adipose tissue, polyubiquitinated by the BCR(KBTBD2) E3 ubiquitin ligase complex; recognized by KBTBD2 through the SH2 domains, undergoes 'Lys-48'-linked polyubiquitination leading to its degradation.</text>
</comment>
<comment type="PTM">
    <text evidence="1 25 27">Phosphorylated. Tyrosine phosphorylated in response to signaling by FGFR1, FGFR2, FGFR3 and FGFR4. Phosphorylated by CSF1R. Phosphorylated by ERBB4. Phosphorylated on tyrosine residues by TEK/TIE2. Dephosphorylated by PTPRJ. Phosphorylated by PIK3CA at Ser-608; phosphorylation is stimulated by insulin and PDGF. The relevance of phosphorylation by PIK3CA is however unclear (By similarity). Phosphorylated in response to KIT and KITLG/SCF. Phosphorylated by FGR.</text>
</comment>
<comment type="disease" evidence="37">
    <disease id="DI-03723">
        <name>Agammaglobulinemia 7, autosomal recessive</name>
        <acronym>AGM7</acronym>
        <description>A primary immunodeficiency characterized by profoundly low or absent serum antibodies and low or absent circulating B-cells due to an early block of B-cell development. Affected individuals develop severe infections in the first years of life.</description>
        <dbReference type="MIM" id="615214"/>
    </disease>
    <text>The disease is caused by variants affecting the gene represented in this entry.</text>
</comment>
<comment type="disease" evidence="40 41 42">
    <disease id="DI-03868">
        <name>SHORT syndrome</name>
        <acronym>SHORTS</acronym>
        <description>A rare, multisystem disease characterized by short stature, anomalies of the anterior chamber of the eye, characteristic facial features such as triangular facies, lack of facial fat, and hypoplastic nasal alae with overhanging columella, partial lipodystrophy, hernias, hyperextensibility, and delayed dentition. The clinical phenotype can include insulin resistance, nephrocalcinosis, and hearing deficits. Developmental milestones and cognition are normal.</description>
        <dbReference type="MIM" id="269880"/>
    </disease>
    <text>The disease is caused by variants affecting the gene represented in this entry.</text>
</comment>
<comment type="disease" evidence="43">
    <disease id="DI-04215">
        <name>Immunodeficiency 36 with lymphoproliferation</name>
        <acronym>IMD36</acronym>
        <description>A primary immunodeficiency characterized by impaired B-cell function, hypogammaglobulinemia and recurrent infections.</description>
        <dbReference type="MIM" id="616005"/>
    </disease>
    <text>The disease is caused by variants affecting the gene represented in this entry.</text>
</comment>
<comment type="similarity">
    <text evidence="69">Belongs to the PI3K p85 subunit family.</text>
</comment>
<comment type="online information" name="Atlas of Genetics and Cytogenetics in Oncology and Haematology">
    <link uri="https://atlasgeneticsoncology.org/gene/41717/PIK3R1"/>
</comment>
<proteinExistence type="evidence at protein level"/>
<reference key="1">
    <citation type="journal article" date="1991" name="Cell">
        <title>Cloning of PI3 kinase-associated p85 utilizing a novel method for expression/cloning of target proteins for receptor tyrosine kinases.</title>
        <authorList>
            <person name="Skolnik E.Y."/>
            <person name="Margolis B."/>
            <person name="Mohammadi M."/>
            <person name="Lowenstein E."/>
            <person name="Fischer R."/>
            <person name="Drepps A."/>
            <person name="Ullrich A."/>
            <person name="Schlessinger J."/>
        </authorList>
    </citation>
    <scope>NUCLEOTIDE SEQUENCE [MRNA] (ISOFORM 1)</scope>
</reference>
<reference key="2">
    <citation type="journal article" date="1996" name="Mol. Cell. Biol.">
        <title>Insulin receptor substrate 1 binds two novel splice variants of the regulatory subunit of phosphatidylinositol 3-kinase in muscle and brain.</title>
        <authorList>
            <person name="Antonetti D.A."/>
            <person name="Algenstaedt P."/>
            <person name="Kahn C.R."/>
        </authorList>
    </citation>
    <scope>NUCLEOTIDE SEQUENCE [MRNA] (ISOFORMS 2 AND 4)</scope>
    <scope>INTERACTION WITH IRS1</scope>
    <scope>TISSUE SPECIFICITY</scope>
    <source>
        <tissue>Skeletal muscle</tissue>
    </source>
</reference>
<reference key="3">
    <citation type="submission" date="2000-06" db="EMBL/GenBank/DDBJ databases">
        <authorList>
            <person name="Udelhoven M."/>
            <person name="Kotzka J."/>
            <person name="Knebel B."/>
            <person name="Klein E."/>
            <person name="Krone W."/>
            <person name="Mueller-Wieland D."/>
        </authorList>
    </citation>
    <scope>NUCLEOTIDE SEQUENCE [MRNA] (ISOFORM 3)</scope>
    <source>
        <tissue>Skeletal muscle</tissue>
    </source>
</reference>
<reference key="4">
    <citation type="journal article" date="2004" name="Nat. Genet.">
        <title>Complete sequencing and characterization of 21,243 full-length human cDNAs.</title>
        <authorList>
            <person name="Ota T."/>
            <person name="Suzuki Y."/>
            <person name="Nishikawa T."/>
            <person name="Otsuki T."/>
            <person name="Sugiyama T."/>
            <person name="Irie R."/>
            <person name="Wakamatsu A."/>
            <person name="Hayashi K."/>
            <person name="Sato H."/>
            <person name="Nagai K."/>
            <person name="Kimura K."/>
            <person name="Makita H."/>
            <person name="Sekine M."/>
            <person name="Obayashi M."/>
            <person name="Nishi T."/>
            <person name="Shibahara T."/>
            <person name="Tanaka T."/>
            <person name="Ishii S."/>
            <person name="Yamamoto J."/>
            <person name="Saito K."/>
            <person name="Kawai Y."/>
            <person name="Isono Y."/>
            <person name="Nakamura Y."/>
            <person name="Nagahari K."/>
            <person name="Murakami K."/>
            <person name="Yasuda T."/>
            <person name="Iwayanagi T."/>
            <person name="Wagatsuma M."/>
            <person name="Shiratori A."/>
            <person name="Sudo H."/>
            <person name="Hosoiri T."/>
            <person name="Kaku Y."/>
            <person name="Kodaira H."/>
            <person name="Kondo H."/>
            <person name="Sugawara M."/>
            <person name="Takahashi M."/>
            <person name="Kanda K."/>
            <person name="Yokoi T."/>
            <person name="Furuya T."/>
            <person name="Kikkawa E."/>
            <person name="Omura Y."/>
            <person name="Abe K."/>
            <person name="Kamihara K."/>
            <person name="Katsuta N."/>
            <person name="Sato K."/>
            <person name="Tanikawa M."/>
            <person name="Yamazaki M."/>
            <person name="Ninomiya K."/>
            <person name="Ishibashi T."/>
            <person name="Yamashita H."/>
            <person name="Murakawa K."/>
            <person name="Fujimori K."/>
            <person name="Tanai H."/>
            <person name="Kimata M."/>
            <person name="Watanabe M."/>
            <person name="Hiraoka S."/>
            <person name="Chiba Y."/>
            <person name="Ishida S."/>
            <person name="Ono Y."/>
            <person name="Takiguchi S."/>
            <person name="Watanabe S."/>
            <person name="Yosida M."/>
            <person name="Hotuta T."/>
            <person name="Kusano J."/>
            <person name="Kanehori K."/>
            <person name="Takahashi-Fujii A."/>
            <person name="Hara H."/>
            <person name="Tanase T.-O."/>
            <person name="Nomura Y."/>
            <person name="Togiya S."/>
            <person name="Komai F."/>
            <person name="Hara R."/>
            <person name="Takeuchi K."/>
            <person name="Arita M."/>
            <person name="Imose N."/>
            <person name="Musashino K."/>
            <person name="Yuuki H."/>
            <person name="Oshima A."/>
            <person name="Sasaki N."/>
            <person name="Aotsuka S."/>
            <person name="Yoshikawa Y."/>
            <person name="Matsunawa H."/>
            <person name="Ichihara T."/>
            <person name="Shiohata N."/>
            <person name="Sano S."/>
            <person name="Moriya S."/>
            <person name="Momiyama H."/>
            <person name="Satoh N."/>
            <person name="Takami S."/>
            <person name="Terashima Y."/>
            <person name="Suzuki O."/>
            <person name="Nakagawa S."/>
            <person name="Senoh A."/>
            <person name="Mizoguchi H."/>
            <person name="Goto Y."/>
            <person name="Shimizu F."/>
            <person name="Wakebe H."/>
            <person name="Hishigaki H."/>
            <person name="Watanabe T."/>
            <person name="Sugiyama A."/>
            <person name="Takemoto M."/>
            <person name="Kawakami B."/>
            <person name="Yamazaki M."/>
            <person name="Watanabe K."/>
            <person name="Kumagai A."/>
            <person name="Itakura S."/>
            <person name="Fukuzumi Y."/>
            <person name="Fujimori Y."/>
            <person name="Komiyama M."/>
            <person name="Tashiro H."/>
            <person name="Tanigami A."/>
            <person name="Fujiwara T."/>
            <person name="Ono T."/>
            <person name="Yamada K."/>
            <person name="Fujii Y."/>
            <person name="Ozaki K."/>
            <person name="Hirao M."/>
            <person name="Ohmori Y."/>
            <person name="Kawabata A."/>
            <person name="Hikiji T."/>
            <person name="Kobatake N."/>
            <person name="Inagaki H."/>
            <person name="Ikema Y."/>
            <person name="Okamoto S."/>
            <person name="Okitani R."/>
            <person name="Kawakami T."/>
            <person name="Noguchi S."/>
            <person name="Itoh T."/>
            <person name="Shigeta K."/>
            <person name="Senba T."/>
            <person name="Matsumura K."/>
            <person name="Nakajima Y."/>
            <person name="Mizuno T."/>
            <person name="Morinaga M."/>
            <person name="Sasaki M."/>
            <person name="Togashi T."/>
            <person name="Oyama M."/>
            <person name="Hata H."/>
            <person name="Watanabe M."/>
            <person name="Komatsu T."/>
            <person name="Mizushima-Sugano J."/>
            <person name="Satoh T."/>
            <person name="Shirai Y."/>
            <person name="Takahashi Y."/>
            <person name="Nakagawa K."/>
            <person name="Okumura K."/>
            <person name="Nagase T."/>
            <person name="Nomura N."/>
            <person name="Kikuchi H."/>
            <person name="Masuho Y."/>
            <person name="Yamashita R."/>
            <person name="Nakai K."/>
            <person name="Yada T."/>
            <person name="Nakamura Y."/>
            <person name="Ohara O."/>
            <person name="Isogai T."/>
            <person name="Sugano S."/>
        </authorList>
    </citation>
    <scope>NUCLEOTIDE SEQUENCE [LARGE SCALE MRNA] (ISOFORM 5)</scope>
    <source>
        <tissue>Brain</tissue>
    </source>
</reference>
<reference key="5">
    <citation type="submission" date="2005-04" db="EMBL/GenBank/DDBJ databases">
        <authorList>
            <person name="Totoki Y."/>
            <person name="Toyoda A."/>
            <person name="Takeda T."/>
            <person name="Sakaki Y."/>
            <person name="Tanaka A."/>
            <person name="Yokoyama S."/>
        </authorList>
    </citation>
    <scope>NUCLEOTIDE SEQUENCE [LARGE SCALE MRNA] (ISOFORM 2)</scope>
    <scope>VARIANT ILE-326</scope>
    <source>
        <tissue>Brain</tissue>
    </source>
</reference>
<reference key="6">
    <citation type="journal article" date="2004" name="Nature">
        <title>The DNA sequence and comparative analysis of human chromosome 5.</title>
        <authorList>
            <person name="Schmutz J."/>
            <person name="Martin J."/>
            <person name="Terry A."/>
            <person name="Couronne O."/>
            <person name="Grimwood J."/>
            <person name="Lowry S."/>
            <person name="Gordon L.A."/>
            <person name="Scott D."/>
            <person name="Xie G."/>
            <person name="Huang W."/>
            <person name="Hellsten U."/>
            <person name="Tran-Gyamfi M."/>
            <person name="She X."/>
            <person name="Prabhakar S."/>
            <person name="Aerts A."/>
            <person name="Altherr M."/>
            <person name="Bajorek E."/>
            <person name="Black S."/>
            <person name="Branscomb E."/>
            <person name="Caoile C."/>
            <person name="Challacombe J.F."/>
            <person name="Chan Y.M."/>
            <person name="Denys M."/>
            <person name="Detter J.C."/>
            <person name="Escobar J."/>
            <person name="Flowers D."/>
            <person name="Fotopulos D."/>
            <person name="Glavina T."/>
            <person name="Gomez M."/>
            <person name="Gonzales E."/>
            <person name="Goodstein D."/>
            <person name="Grigoriev I."/>
            <person name="Groza M."/>
            <person name="Hammon N."/>
            <person name="Hawkins T."/>
            <person name="Haydu L."/>
            <person name="Israni S."/>
            <person name="Jett J."/>
            <person name="Kadner K."/>
            <person name="Kimball H."/>
            <person name="Kobayashi A."/>
            <person name="Lopez F."/>
            <person name="Lou Y."/>
            <person name="Martinez D."/>
            <person name="Medina C."/>
            <person name="Morgan J."/>
            <person name="Nandkeshwar R."/>
            <person name="Noonan J.P."/>
            <person name="Pitluck S."/>
            <person name="Pollard M."/>
            <person name="Predki P."/>
            <person name="Priest J."/>
            <person name="Ramirez L."/>
            <person name="Retterer J."/>
            <person name="Rodriguez A."/>
            <person name="Rogers S."/>
            <person name="Salamov A."/>
            <person name="Salazar A."/>
            <person name="Thayer N."/>
            <person name="Tice H."/>
            <person name="Tsai M."/>
            <person name="Ustaszewska A."/>
            <person name="Vo N."/>
            <person name="Wheeler J."/>
            <person name="Wu K."/>
            <person name="Yang J."/>
            <person name="Dickson M."/>
            <person name="Cheng J.-F."/>
            <person name="Eichler E.E."/>
            <person name="Olsen A."/>
            <person name="Pennacchio L.A."/>
            <person name="Rokhsar D.S."/>
            <person name="Richardson P."/>
            <person name="Lucas S.M."/>
            <person name="Myers R.M."/>
            <person name="Rubin E.M."/>
        </authorList>
    </citation>
    <scope>NUCLEOTIDE SEQUENCE [LARGE SCALE GENOMIC DNA]</scope>
</reference>
<reference key="7">
    <citation type="submission" date="2005-09" db="EMBL/GenBank/DDBJ databases">
        <authorList>
            <person name="Mural R.J."/>
            <person name="Istrail S."/>
            <person name="Sutton G.G."/>
            <person name="Florea L."/>
            <person name="Halpern A.L."/>
            <person name="Mobarry C.M."/>
            <person name="Lippert R."/>
            <person name="Walenz B."/>
            <person name="Shatkay H."/>
            <person name="Dew I."/>
            <person name="Miller J.R."/>
            <person name="Flanigan M.J."/>
            <person name="Edwards N.J."/>
            <person name="Bolanos R."/>
            <person name="Fasulo D."/>
            <person name="Halldorsson B.V."/>
            <person name="Hannenhalli S."/>
            <person name="Turner R."/>
            <person name="Yooseph S."/>
            <person name="Lu F."/>
            <person name="Nusskern D.R."/>
            <person name="Shue B.C."/>
            <person name="Zheng X.H."/>
            <person name="Zhong F."/>
            <person name="Delcher A.L."/>
            <person name="Huson D.H."/>
            <person name="Kravitz S.A."/>
            <person name="Mouchard L."/>
            <person name="Reinert K."/>
            <person name="Remington K.A."/>
            <person name="Clark A.G."/>
            <person name="Waterman M.S."/>
            <person name="Eichler E.E."/>
            <person name="Adams M.D."/>
            <person name="Hunkapiller M.W."/>
            <person name="Myers E.W."/>
            <person name="Venter J.C."/>
        </authorList>
    </citation>
    <scope>NUCLEOTIDE SEQUENCE [LARGE SCALE GENOMIC DNA]</scope>
</reference>
<reference key="8">
    <citation type="journal article" date="2004" name="Genome Res.">
        <title>The status, quality, and expansion of the NIH full-length cDNA project: the Mammalian Gene Collection (MGC).</title>
        <authorList>
            <consortium name="The MGC Project Team"/>
        </authorList>
    </citation>
    <scope>NUCLEOTIDE SEQUENCE [LARGE SCALE MRNA] (ISOFORMS 1 AND 2)</scope>
    <scope>VARIANT LYS-451</scope>
    <source>
        <tissue>Placenta</tissue>
        <tissue>Skeletal muscle</tissue>
    </source>
</reference>
<reference key="9">
    <citation type="journal article" date="1993" name="Mol. Cell. Biol.">
        <title>Two signaling molecules share a phosphotyrosine-containing binding site in the platelet-derived growth factor receptor.</title>
        <authorList>
            <person name="Nishimura R."/>
            <person name="Li W."/>
            <person name="Kashishian A."/>
            <person name="Mondino A."/>
            <person name="Zhou M."/>
            <person name="Cooper J."/>
            <person name="Schlessinger J."/>
        </authorList>
    </citation>
    <scope>INTERACTION WITH PDGFRB</scope>
</reference>
<reference key="10">
    <citation type="journal article" date="1994" name="J. Biol. Chem.">
        <title>Direct activation of the phosphatidylinositol 3'-kinase by the insulin receptor.</title>
        <authorList>
            <person name="Van Horn D.J."/>
            <person name="Myers M.G. Jr."/>
            <person name="Backer J.M."/>
        </authorList>
    </citation>
    <scope>INTERACTION WITH INSR</scope>
</reference>
<reference key="11">
    <citation type="journal article" date="1994" name="J. Biol. Chem.">
        <title>Signal transduction by fibroblast growth factor receptor-4 (FGFR-4). Comparison with FGFR-1.</title>
        <authorList>
            <person name="Vainikka S."/>
            <person name="Joukov V."/>
            <person name="Wennstrom S."/>
            <person name="Bergman M."/>
            <person name="Pelicci P.G."/>
            <person name="Alitalo K."/>
        </authorList>
    </citation>
    <scope>FUNCTION IN FGFR4 SIGNALING</scope>
</reference>
<reference key="12">
    <citation type="journal article" date="1995" name="J. Biol. Chem.">
        <title>Non-SH2 domains within insulin receptor substrate-1 and SHC mediate their phosphotyrosine-dependent interaction with the NPEY motif of the insulin-like growth factor I receptor.</title>
        <authorList>
            <person name="Craparo A."/>
            <person name="O'Neill T.J."/>
            <person name="Gustafson T.A."/>
        </authorList>
    </citation>
    <scope>INTERACTION WITH IGF1R</scope>
</reference>
<reference key="13">
    <citation type="journal article" date="1995" name="Proc. Natl. Acad. Sci. U.S.A.">
        <title>p56Lck and p59Fyn regulate CD28 binding to phosphatidylinositol 3-kinase, growth factor receptor-bound protein GRB-2, and T cell-specific protein-tyrosine kinase ITK: implications for T-cell costimulation.</title>
        <authorList>
            <person name="Raab M."/>
            <person name="Cai Y.C."/>
            <person name="Bunnell S.C."/>
            <person name="Heyeck S.D."/>
            <person name="Berg L.J."/>
            <person name="Rudd C.E."/>
        </authorList>
    </citation>
    <scope>INTERACTION WITH CD28</scope>
</reference>
<reference key="14">
    <citation type="journal article" date="1995" name="Mol. Cell. Biol.">
        <title>Phosphotyrosine-dependent interaction of SHC and insulin receptor substrate 1 with the NPEY motif of the insulin receptor via a novel non-SH2 domain.</title>
        <authorList>
            <person name="Gustafson T.A."/>
            <person name="He W."/>
            <person name="Craparo A."/>
            <person name="Schaub C.D."/>
            <person name="O'Neill T.J."/>
        </authorList>
    </citation>
    <scope>INTERACTION WITH INSR</scope>
</reference>
<reference key="15">
    <citation type="journal article" date="1996" name="J. Biol. Chem.">
        <title>Grb7 is a downstream signaling component of platelet-derived growth factor alpha- and beta-receptors.</title>
        <authorList>
            <person name="Yokote K."/>
            <person name="Margolis B."/>
            <person name="Heldin C.H."/>
            <person name="Claesson-Welsh L."/>
        </authorList>
    </citation>
    <scope>INTERACTION WITH PDGFRA</scope>
</reference>
<reference key="16">
    <citation type="journal article" date="1997" name="J. Biol. Chem.">
        <title>Direct association of Csk homologous kinase (CHK) with the diphosphorylated site Tyr568/570 of the activated c-KIT in megakaryocytes.</title>
        <authorList>
            <person name="Price D.J."/>
            <person name="Rivnay B."/>
            <person name="Fu Y."/>
            <person name="Jiang S."/>
            <person name="Avraham S."/>
            <person name="Avraham H."/>
        </authorList>
    </citation>
    <scope>INTERACTION WITH KIT</scope>
</reference>
<reference key="17">
    <citation type="journal article" date="1997" name="Oncogene">
        <title>Intracellular signaling of the Ufo/Axl receptor tyrosine kinase is mediated mainly by a multi-substrate docking-site.</title>
        <authorList>
            <person name="Braunger J."/>
            <person name="Schleithoff L."/>
            <person name="Schulz A.S."/>
            <person name="Kessler H."/>
            <person name="Lammers R."/>
            <person name="Ullrich A."/>
            <person name="Bartram C.R."/>
            <person name="Janssen J.W."/>
        </authorList>
    </citation>
    <scope>INTERACTION WITH AXL</scope>
</reference>
<reference key="18">
    <citation type="journal article" date="1998" name="Cell">
        <title>LAT: the ZAP-70 tyrosine kinase substrate that links T cell receptor to cellular activation.</title>
        <authorList>
            <person name="Zhang W."/>
            <person name="Sloan-Lancaster J."/>
            <person name="Kitchen J."/>
            <person name="Trible R.P."/>
            <person name="Samelson L.E."/>
        </authorList>
    </citation>
    <scope>INTERACTION WITH LAT</scope>
</reference>
<reference key="19">
    <citation type="journal article" date="1998" name="J. Biol. Chem.">
        <title>Characterization of insulin receptor substrate 4 in human embryonic kidney 293 cells.</title>
        <authorList>
            <person name="Fantin V.R."/>
            <person name="Sparling J.D."/>
            <person name="Slot J.W."/>
            <person name="Keller S.R."/>
            <person name="Lienhard G.E."/>
            <person name="Lavan B.E."/>
        </authorList>
    </citation>
    <scope>INTERACTION WITH IRS4</scope>
</reference>
<reference key="20">
    <citation type="journal article" date="1998" name="J. Exp. Med.">
        <title>T cell receptor (TCR) interacting molecule (TRIM), a novel disulfide-linked dimer associated with the TCR-CD3-zeta complex, recruits intracellular signaling proteins to the plasma membrane.</title>
        <authorList>
            <person name="Bruyns E."/>
            <person name="Marie-Cardine A."/>
            <person name="Kirchgessner H."/>
            <person name="Sagolla K."/>
            <person name="Shevchenko A."/>
            <person name="Mann M."/>
            <person name="Autschbach F."/>
            <person name="Bensussan A."/>
            <person name="Meuer S."/>
            <person name="Schraven B."/>
        </authorList>
    </citation>
    <scope>INTERACTION WITH TRAT1</scope>
</reference>
<reference key="21">
    <citation type="journal article" date="1999" name="J. Immunol.">
        <title>KAP10, a novel transmembrane adapter protein genetically linked to DAP12 but with unique signaling properties.</title>
        <authorList>
            <person name="Chang C."/>
            <person name="Dietrich J."/>
            <person name="Harpur A.G."/>
            <person name="Lindquist J.A."/>
            <person name="Haude A."/>
            <person name="Loke Y.W."/>
            <person name="King A."/>
            <person name="Colonna M."/>
            <person name="Trowsdale J."/>
            <person name="Wilson M.J."/>
        </authorList>
    </citation>
    <scope>INTERACTION WITH HCST</scope>
</reference>
<reference key="22">
    <citation type="journal article" date="1999" name="Oncogene">
        <title>cbl-b inhibits epidermal growth factor receptor signaling.</title>
        <authorList>
            <person name="Ettenberg S.A."/>
            <person name="Keane M.M."/>
            <person name="Nau M.M."/>
            <person name="Frankel M."/>
            <person name="Wang L.-M."/>
            <person name="Pierce J.H."/>
            <person name="Lipkowitz S."/>
        </authorList>
    </citation>
    <scope>INTERACTION WITH CBLB</scope>
</reference>
<reference key="23">
    <citation type="journal article" date="2000" name="Exp. Cell Res.">
        <title>Clustering of beta(2)-integrins on human neutrophils activates dual signaling pathways to PtdIns 3-kinase.</title>
        <authorList>
            <person name="Axelsson L."/>
            <person name="Hellberg C."/>
            <person name="Melander F."/>
            <person name="Smith D."/>
            <person name="Zheng L."/>
            <person name="Andersson T."/>
        </authorList>
    </citation>
    <scope>INTERACTION WITH FGR AND HCK</scope>
</reference>
<reference key="24">
    <citation type="journal article" date="2000" name="J. Biol. Chem.">
        <title>Ligand discrimination in signaling through an ErbB4 receptor homodimer.</title>
        <authorList>
            <person name="Sweeney C."/>
            <person name="Lai C."/>
            <person name="Riese D.J. II"/>
            <person name="Diamonti A.J."/>
            <person name="Cantley L.C."/>
            <person name="Carraway K.L. III"/>
        </authorList>
    </citation>
    <scope>INTERACTION WITH ERBB4</scope>
</reference>
<reference key="25">
    <citation type="journal article" date="2000" name="J. Biol. Chem.">
        <title>Urokinase stimulates human vascular smooth muscle cell migration via a phosphatidylinositol 3-kinase-Tyk2 interaction.</title>
        <authorList>
            <person name="Kusch A."/>
            <person name="Tkachuk S."/>
            <person name="Haller H."/>
            <person name="Dietz R."/>
            <person name="Gulba D.C."/>
            <person name="Lipp M."/>
            <person name="Dumler I."/>
        </authorList>
    </citation>
    <scope>INTERACTION WITH TYK2</scope>
</reference>
<reference key="26">
    <citation type="journal article" date="2001" name="J. Biol. Chem.">
        <title>Cbl-b, a RING-type E3 ubiquitin ligase, targets phosphatidylinositol 3-kinase for ubiquitination in T cells.</title>
        <authorList>
            <person name="Fang D."/>
            <person name="Wang H.-Y."/>
            <person name="Fang N."/>
            <person name="Altman Y."/>
            <person name="Elly C."/>
            <person name="Liu Y.-C."/>
        </authorList>
    </citation>
    <scope>INTERACTION WITH CBLB</scope>
    <scope>UBIQUITINATION</scope>
</reference>
<reference key="27">
    <citation type="journal article" date="2001" name="Nat. Immunol.">
        <title>Proteolysis-independent regulation of PI3K by Cbl-b-mediated ubiquitination in T cells.</title>
        <authorList>
            <person name="Fang D."/>
            <person name="Liu Y.-C."/>
        </authorList>
    </citation>
    <scope>INTERACTION WITH CD3Z AND CD28</scope>
    <scope>UBIQUITINATION</scope>
</reference>
<reference key="28">
    <citation type="journal article" date="2002" name="J. Biol. Chem.">
        <title>Insulin receptor substrate 4 associates with the protein IRAS.</title>
        <authorList>
            <person name="Sano H."/>
            <person name="Liu S.C.H."/>
            <person name="Lane W.S."/>
            <person name="Piletz J.E."/>
            <person name="Lienhard G.E."/>
        </authorList>
    </citation>
    <scope>INTERACTION WITH NISCH</scope>
</reference>
<reference key="29">
    <citation type="journal article" date="2002" name="J. Biol. Chem.">
        <title>Molecular cloning of a novel gene encoding a membrane-associated adaptor protein (LAX) in lymphocyte signaling.</title>
        <authorList>
            <person name="Zhu M."/>
            <person name="Janssen E."/>
            <person name="Leung K."/>
            <person name="Zhang W."/>
        </authorList>
    </citation>
    <scope>INTERACTION WITH LAX1</scope>
</reference>
<reference key="30">
    <citation type="journal article" date="2002" name="Virology">
        <title>Interaction between Nef and phosphatidylinositol-3-kinase leads to activation of p21-activated kinase and increased production of HIV.</title>
        <authorList>
            <person name="Linnemann T."/>
            <person name="Zheng Y.-H."/>
            <person name="Mandic R."/>
            <person name="Peterlin B.M."/>
        </authorList>
    </citation>
    <scope>INTERACTION WITH HIV-1 NEF (MICROBIAL INFECTION)</scope>
</reference>
<reference key="31">
    <citation type="journal article" date="2002" name="J. Virol.">
        <title>Subversion of cell signaling pathways by hepatitis C virus nonstructural 5A protein via interaction with Grb2 and P85 phosphatidylinositol 3-kinase.</title>
        <authorList>
            <person name="He Y."/>
            <person name="Nakao H."/>
            <person name="Tan S.-L."/>
            <person name="Polyak S.J."/>
            <person name="Neddermann P."/>
            <person name="Vijaysri S."/>
            <person name="Jacobs B.L."/>
            <person name="Katze M.G."/>
        </authorList>
    </citation>
    <scope>INTERACTION WITH HCV NS5A (MICROBIAL INFECTION)</scope>
</reference>
<reference key="32">
    <citation type="journal article" date="2004" name="Cancer Cell">
        <title>TrkA alternative splicing: a regulated tumor-promoting switch in human neuroblastoma.</title>
        <authorList>
            <person name="Tacconelli A."/>
            <person name="Farina A.R."/>
            <person name="Cappabianca L."/>
            <person name="Desantis G."/>
            <person name="Tessitore A."/>
            <person name="Vetuschi A."/>
            <person name="Sferra R."/>
            <person name="Rucci N."/>
            <person name="Argenti B."/>
            <person name="Screpanti I."/>
            <person name="Gulino A."/>
            <person name="Mackay A.R."/>
        </authorList>
    </citation>
    <scope>INTERACTION WITH NTRK1</scope>
</reference>
<reference key="33">
    <citation type="journal article" date="2004" name="Cell. Mol. Life Sci.">
        <title>Signal transduction via the stem cell factor receptor/c-Kit.</title>
        <authorList>
            <person name="Ronnstrand L."/>
        </authorList>
    </citation>
    <scope>REVIEW ON INTERACTION WITH KIT AND ROLE IN KIT SIGNALING</scope>
</reference>
<reference key="34">
    <citation type="journal article" date="2004" name="Exp. Cell Res.">
        <title>The c-Fes tyrosine kinase cooperates with the breakpoint cluster region protein (Bcr) to induce neurite extension in a Rac- and Cdc42-dependent manner.</title>
        <authorList>
            <person name="Laurent C.E."/>
            <person name="Smithgall T.E."/>
        </authorList>
    </citation>
    <scope>INTERACTION WITH BCR</scope>
</reference>
<reference key="35">
    <citation type="journal article" date="2005" name="Exp. Cell Res.">
        <title>The proto-oncogene Fgr regulates cell migration and this requires its plasma membrane localization.</title>
        <authorList>
            <person name="Continolo S."/>
            <person name="Baruzzi A."/>
            <person name="Majeed M."/>
            <person name="Caveggion E."/>
            <person name="Fumagalli L."/>
            <person name="Lowell C.A."/>
            <person name="Berton G."/>
        </authorList>
    </citation>
    <scope>PHOSPHORYLATION BY FGR</scope>
</reference>
<reference key="36">
    <citation type="journal article" date="2005" name="Nat. Biotechnol.">
        <title>Immunoaffinity profiling of tyrosine phosphorylation in cancer cells.</title>
        <authorList>
            <person name="Rush J."/>
            <person name="Moritz A."/>
            <person name="Lee K.A."/>
            <person name="Guo A."/>
            <person name="Goss V.L."/>
            <person name="Spek E.J."/>
            <person name="Zhang H."/>
            <person name="Zha X.-M."/>
            <person name="Polakiewicz R.D."/>
            <person name="Comb M.J."/>
        </authorList>
    </citation>
    <scope>IDENTIFICATION BY MASS SPECTROMETRY [LARGE SCALE ANALYSIS]</scope>
</reference>
<reference key="37">
    <citation type="journal article" date="2008" name="Biochem. J.">
        <title>The tyrosine phosphatase CD148 interacts with the p85 regulatory subunit of phosphoinositide 3-kinase.</title>
        <authorList>
            <person name="Tsuboi N."/>
            <person name="Utsunomiya T."/>
            <person name="Roberts R.L."/>
            <person name="Ito H."/>
            <person name="Takahashi K."/>
            <person name="Noda M."/>
            <person name="Takahashi T."/>
        </authorList>
    </citation>
    <scope>PHOSPHORYLATION</scope>
    <scope>DEPHOSPHORYLATION BY PTPRJ</scope>
</reference>
<reference key="38">
    <citation type="journal article" date="2008" name="Sci. Signal.">
        <title>Type I IL-4Rs selectively activate IRS-2 to induce target gene expression in macrophages.</title>
        <authorList>
            <person name="Heller N.M."/>
            <person name="Qi X."/>
            <person name="Junttila I.S."/>
            <person name="Shirey K.A."/>
            <person name="Vogel S.N."/>
            <person name="Paul W.E."/>
            <person name="Keegan A.D."/>
        </authorList>
    </citation>
    <scope>INTERACTION WITH IRS2</scope>
</reference>
<reference key="39">
    <citation type="journal article" date="2008" name="Chem. Biol.">
        <title>System-wide investigation of ErbB4 reveals 19 sites of Tyr phosphorylation that are unusually selective in their recruitment properties.</title>
        <authorList>
            <person name="Kaushansky A."/>
            <person name="Gordus A."/>
            <person name="Budnik B.A."/>
            <person name="Lane W.S."/>
            <person name="Rush J."/>
            <person name="MacBeath G."/>
        </authorList>
    </citation>
    <scope>INTERACTION WITH ERBB4</scope>
</reference>
<reference key="40">
    <citation type="journal article" date="2009" name="BMC Immunol.">
        <title>Identification of SH3 domain interaction partners of human FasL (CD178) by phage display screening.</title>
        <authorList>
            <person name="Voss M."/>
            <person name="Lettau M."/>
            <person name="Janssen O."/>
        </authorList>
    </citation>
    <scope>INTERACTION WITH FASLG</scope>
</reference>
<reference key="41">
    <citation type="journal article" date="2009" name="Hum. Mol. Genet.">
        <title>A novel interaction between fibroblast growth factor receptor 3 and the p85 subunit of phosphoinositide 3-kinase: activation-dependent regulation of ERK by p85 in multiple myeloma cells.</title>
        <authorList>
            <person name="Salazar L."/>
            <person name="Kashiwada T."/>
            <person name="Krejci P."/>
            <person name="Muchowski P."/>
            <person name="Donoghue D."/>
            <person name="Wilcox W.R."/>
            <person name="Thompson L.M."/>
        </authorList>
    </citation>
    <scope>INTERACTION WITH FGFR3</scope>
</reference>
<reference key="42">
    <citation type="journal article" date="2005" name="Cytokine Growth Factor Rev.">
        <title>Cellular signaling by fibroblast growth factor receptors.</title>
        <authorList>
            <person name="Eswarakumar V.P."/>
            <person name="Lax I."/>
            <person name="Schlessinger J."/>
        </authorList>
    </citation>
    <scope>REVIEW ON ROLE IN FGFR1 SIGNALING</scope>
</reference>
<reference key="43">
    <citation type="journal article" date="2009" name="Mol. Cell. Proteomics">
        <title>Large-scale proteomics analysis of the human kinome.</title>
        <authorList>
            <person name="Oppermann F.S."/>
            <person name="Gnad F."/>
            <person name="Olsen J.V."/>
            <person name="Hornberger R."/>
            <person name="Greff Z."/>
            <person name="Keri G."/>
            <person name="Mann M."/>
            <person name="Daub H."/>
        </authorList>
    </citation>
    <scope>PHOSPHORYLATION [LARGE SCALE ANALYSIS] AT TYR-580</scope>
    <scope>IDENTIFICATION BY MASS SPECTROMETRY [LARGE SCALE ANALYSIS]</scope>
</reference>
<reference key="44">
    <citation type="journal article" date="2009" name="Sci. Signal.">
        <title>Quantitative phosphoproteomic analysis of T cell receptor signaling reveals system-wide modulation of protein-protein interactions.</title>
        <authorList>
            <person name="Mayya V."/>
            <person name="Lundgren D.H."/>
            <person name="Hwang S.-I."/>
            <person name="Rezaul K."/>
            <person name="Wu L."/>
            <person name="Eng J.K."/>
            <person name="Rodionov V."/>
            <person name="Han D.K."/>
        </authorList>
    </citation>
    <scope>IDENTIFICATION BY MASS SPECTROMETRY [LARGE SCALE ANALYSIS]</scope>
    <source>
        <tissue>Leukemic T-cell</tissue>
    </source>
</reference>
<reference key="45">
    <citation type="journal article" date="2010" name="Nat. Med.">
        <title>A regulatory subunit of phosphoinositide 3-kinase increases the nuclear accumulation of X-box-binding protein-1 to modulate the unfolded protein response.</title>
        <authorList>
            <person name="Winnay J.N."/>
            <person name="Boucher J."/>
            <person name="Mori M.A."/>
            <person name="Ueki K."/>
            <person name="Kahn C.R."/>
        </authorList>
    </citation>
    <scope>FUNCTION</scope>
    <scope>INTERACTION WITH XBP1</scope>
</reference>
<reference key="46">
    <citation type="journal article" date="2011" name="Exp. Mol. Med.">
        <title>Ligation of CD40 receptor in human B lymphocytes triggers the 5-lipoxygenase pathway to produce reactive oxygen species and activate p38 MAPK.</title>
        <authorList>
            <person name="Ha Y.J."/>
            <person name="Seul H.J."/>
            <person name="Lee J.R."/>
        </authorList>
    </citation>
    <scope>INTERACTION WITH ALOX5</scope>
</reference>
<reference key="47">
    <citation type="journal article" date="2011" name="J. Virol.">
        <title>Herpes simplex virus requires VP11/12 to activate Src family kinase-phosphoinositide 3-kinase-Akt signaling.</title>
        <authorList>
            <person name="Wagner M.J."/>
            <person name="Smiley J.R."/>
        </authorList>
    </citation>
    <scope>INTERACTION WITH HERPES SIMPLEX VIRUS 1 UL46 (MICROBIAL INFECTION)</scope>
</reference>
<reference key="48">
    <citation type="journal article" date="2011" name="Sci. Signal.">
        <title>Tyrosine phosphorylation of the Galpha-interacting protein GIV promotes activation of phosphoinositide 3-kinase during cell migration.</title>
        <authorList>
            <person name="Lin C."/>
            <person name="Ear J."/>
            <person name="Pavlova Y."/>
            <person name="Mittal Y."/>
            <person name="Kufareva I."/>
            <person name="Ghassemian M."/>
            <person name="Abagyan R."/>
            <person name="Garcia-Marcos M."/>
            <person name="Ghosh P."/>
        </authorList>
    </citation>
    <scope>INTERACTION WITH CCDC88A</scope>
</reference>
<reference key="49">
    <citation type="journal article" date="2016" name="Oncogene">
        <title>Caspase-8 tyrosine-380 phosphorylation inhibits CD95 DISC function by preventing procaspase-8 maturation and cycling within the complex.</title>
        <authorList>
            <person name="Powley I.R."/>
            <person name="Hughes M.A."/>
            <person name="Cain K."/>
            <person name="MacFarlane M."/>
        </authorList>
    </citation>
    <scope>INTERACTION WITH CASP8</scope>
</reference>
<reference key="50">
    <citation type="journal article" date="2012" name="J. Exp. Med.">
        <title>Agammaglobulinemia and absent B lineage cells in a patient lacking the p85? subunit of PI3K.</title>
        <authorList>
            <person name="Conley M.E."/>
            <person name="Dobbs A.K."/>
            <person name="Quintana A.M."/>
            <person name="Bosompem A."/>
            <person name="Wang Y.D."/>
            <person name="Coustan-Smith E."/>
            <person name="Smith A.M."/>
            <person name="Perez E.E."/>
            <person name="Murray P.J."/>
        </authorList>
    </citation>
    <scope>INVOLVEMENT IN AGM7</scope>
</reference>
<reference key="51">
    <citation type="journal article" date="2012" name="Proc. Natl. Acad. Sci. U.S.A.">
        <title>N-terminal acetylome analyses and functional insights of the N-terminal acetyltransferase NatB.</title>
        <authorList>
            <person name="Van Damme P."/>
            <person name="Lasa M."/>
            <person name="Polevoda B."/>
            <person name="Gazquez C."/>
            <person name="Elosegui-Artola A."/>
            <person name="Kim D.S."/>
            <person name="De Juan-Pardo E."/>
            <person name="Demeyer K."/>
            <person name="Hole K."/>
            <person name="Larrea E."/>
            <person name="Timmerman E."/>
            <person name="Prieto J."/>
            <person name="Arnesen T."/>
            <person name="Sherman F."/>
            <person name="Gevaert K."/>
            <person name="Aldabe R."/>
        </authorList>
    </citation>
    <scope>ACETYLATION [LARGE SCALE ANALYSIS] AT SER-2</scope>
    <scope>CLEAVAGE OF INITIATOR METHIONINE [LARGE SCALE ANALYSIS]</scope>
    <scope>IDENTIFICATION BY MASS SPECTROMETRY [LARGE SCALE ANALYSIS]</scope>
</reference>
<reference key="52">
    <citation type="journal article" date="2013" name="Am. J. Hum. Genet.">
        <title>Mutations in PIK3R1 cause SHORT syndrome.</title>
        <authorList>
            <consortium name="FORGE Canada Consortium"/>
            <person name="Dyment D.A."/>
            <person name="Smith A.C."/>
            <person name="Alcantara D."/>
            <person name="Schwartzentruber J.A."/>
            <person name="Basel-Vanagaite L."/>
            <person name="Curry C.J."/>
            <person name="Temple I.K."/>
            <person name="Reardon W."/>
            <person name="Mansour S."/>
            <person name="Haq M.R."/>
            <person name="Gilbert R."/>
            <person name="Lehmann O.J."/>
            <person name="Vanstone M.R."/>
            <person name="Beaulieu C.L."/>
            <person name="Majewski J."/>
            <person name="Bulman D.E."/>
            <person name="O'Driscoll M."/>
            <person name="Boycott K.M."/>
            <person name="Innes A.M."/>
            <person name="Friedman J."/>
            <person name="Michaud J."/>
            <person name="Bernier F."/>
            <person name="Brudno M."/>
            <person name="Fernandez B."/>
            <person name="Knoppers B."/>
            <person name="Samuels M."/>
            <person name="Scherer S."/>
        </authorList>
    </citation>
    <scope>INVOLVEMENT IN SHORTS</scope>
    <scope>VARIANT SHORTS TRP-649</scope>
</reference>
<reference key="53">
    <citation type="journal article" date="2013" name="J. Proteome Res.">
        <title>Toward a comprehensive characterization of a human cancer cell phosphoproteome.</title>
        <authorList>
            <person name="Zhou H."/>
            <person name="Di Palma S."/>
            <person name="Preisinger C."/>
            <person name="Peng M."/>
            <person name="Polat A.N."/>
            <person name="Heck A.J."/>
            <person name="Mohammed S."/>
        </authorList>
    </citation>
    <scope>PHOSPHORYLATION [LARGE SCALE ANALYSIS] AT SER-154 AND SER-279</scope>
    <scope>IDENTIFICATION BY MASS SPECTROMETRY [LARGE SCALE ANALYSIS]</scope>
    <source>
        <tissue>Erythroleukemia</tissue>
    </source>
</reference>
<reference key="54">
    <citation type="journal article" date="2013" name="J. Virol.">
        <title>Varicella-zoster virus ORF12 protein activates the phosphatidylinositol 3-kinase/Akt pathway to regulate cell cycle progression.</title>
        <authorList>
            <person name="Liu X."/>
            <person name="Cohen J.I."/>
        </authorList>
    </citation>
    <scope>INTERACTION WITH VARICELLA VIRUS ORF12 (MICROBIAL INFECTION)</scope>
</reference>
<reference key="55">
    <citation type="journal article" date="2013" name="Oncotarget">
        <title>FAM83B-mediated activation of PI3K/AKT and MAPK signaling cooperates to promote epithelial cell transformation and resistance to targeted therapies.</title>
        <authorList>
            <person name="Cipriano R."/>
            <person name="Miskimen K.L."/>
            <person name="Bryson B.L."/>
            <person name="Foy C.R."/>
            <person name="Bartel C.A."/>
            <person name="Jackson M.W."/>
        </authorList>
    </citation>
    <scope>INTERACTION WITH FAM83B</scope>
</reference>
<reference key="56">
    <citation type="journal article" date="2014" name="J. Clin. Invest.">
        <title>A human immunodeficiency caused by mutations in the PIK3R1 gene.</title>
        <authorList>
            <person name="Deau M.C."/>
            <person name="Heurtier L."/>
            <person name="Frange P."/>
            <person name="Suarez F."/>
            <person name="Bole-Feysot C."/>
            <person name="Nitschke P."/>
            <person name="Cavazzana M."/>
            <person name="Picard C."/>
            <person name="Durandy A."/>
            <person name="Fischer A."/>
            <person name="Kracker S."/>
        </authorList>
    </citation>
    <scope>INVOLVEMENT IN IMD36</scope>
</reference>
<reference key="57">
    <citation type="journal article" date="2015" name="Proteomics">
        <title>N-terminome analysis of the human mitochondrial proteome.</title>
        <authorList>
            <person name="Vaca Jacome A.S."/>
            <person name="Rabilloud T."/>
            <person name="Schaeffer-Reiss C."/>
            <person name="Rompais M."/>
            <person name="Ayoub D."/>
            <person name="Lane L."/>
            <person name="Bairoch A."/>
            <person name="Van Dorsselaer A."/>
            <person name="Carapito C."/>
        </authorList>
    </citation>
    <scope>IDENTIFICATION BY MASS SPECTROMETRY [LARGE SCALE ANALYSIS]</scope>
</reference>
<reference key="58">
    <citation type="journal article" date="2017" name="Oncotarget">
        <title>Cancer/testis antigen PIWIL2 suppresses circadian rhythms by regulating the stability and activity of BMAL1 and CLOCK.</title>
        <authorList>
            <person name="Lu Y."/>
            <person name="Zheng X."/>
            <person name="Hu W."/>
            <person name="Bian S."/>
            <person name="Zhang Z."/>
            <person name="Tao D."/>
            <person name="Liu Y."/>
            <person name="Ma Y."/>
        </authorList>
    </citation>
    <scope>INTERACTION WITH SRC</scope>
</reference>
<reference key="59">
    <citation type="journal article" date="2017" name="Sci. Rep.">
        <title>C1-Ten is a PTPase of nephrin, regulating podocyte hypertrophy through mTORC1 activation.</title>
        <authorList>
            <person name="Lee J."/>
            <person name="Koh A."/>
            <person name="Jeong H."/>
            <person name="Kim E."/>
            <person name="Ha T.S."/>
            <person name="Saleem M.A."/>
            <person name="Ryu S.H."/>
        </authorList>
    </citation>
    <scope>INTERACTION WITH NPHN1</scope>
</reference>
<reference key="60">
    <citation type="journal article" date="2016" name="Proc. Natl. Acad. Sci. U.S.A.">
        <title>Insulin resistance and diabetes caused by genetic or diet-induced KBTBD2 deficiency in mice.</title>
        <authorList>
            <person name="Zhang Z."/>
            <person name="Turer E."/>
            <person name="Li X."/>
            <person name="Zhan X."/>
            <person name="Choi M."/>
            <person name="Tang M."/>
            <person name="Press A."/>
            <person name="Smith S.R."/>
            <person name="Divoux A."/>
            <person name="Moresco E.M."/>
            <person name="Beutler B."/>
        </authorList>
    </citation>
    <scope>UBQUITINATION</scope>
</reference>
<reference key="61">
    <citation type="journal article" date="2020" name="Cell. Mol. Immunol.">
        <title>Transmembrane domain-mediated Lck association underlies bystander and costimulatory ICOS signaling.</title>
        <authorList>
            <person name="Wan Z."/>
            <person name="Shao X."/>
            <person name="Ji X."/>
            <person name="Dong L."/>
            <person name="Wei J."/>
            <person name="Xiong Z."/>
            <person name="Liu W."/>
            <person name="Qi H."/>
        </authorList>
    </citation>
    <scope>INTERACTION WITH ICOS</scope>
</reference>
<reference key="62">
    <citation type="journal article" date="1996" name="J. Mol. Biol.">
        <title>Crystal structure of P13K SH3 domain at 2.0-A resolution.</title>
        <authorList>
            <person name="Liang J."/>
            <person name="Chen J.K."/>
            <person name="Schreiber S.L."/>
            <person name="Clardy J."/>
        </authorList>
    </citation>
    <scope>X-RAY CRYSTALLOGRAPHY (2.0 ANGSTROMS) OF 1-85</scope>
</reference>
<reference key="63">
    <citation type="journal article" date="1996" name="Nat. Struct. Biol.">
        <title>Crystal structure of the PI 3-kinase p85 amino-terminal SH2 domain and its phosphopeptide complexes.</title>
        <authorList>
            <person name="Nolte R.T."/>
            <person name="Eck M.J."/>
            <person name="Schlessinger J."/>
            <person name="Shoelson S.E."/>
            <person name="Harrison S.C."/>
        </authorList>
    </citation>
    <scope>X-RAY CRYSTALLOGRAPHY (2.0 ANGSTROMS) OF 324-434</scope>
</reference>
<reference key="64">
    <citation type="journal article" date="1996" name="Proc. Natl. Acad. Sci. U.S.A.">
        <title>Crystal structure of the breakpoint cluster region-homology domain from phosphoinositide 3-kinase p85 alpha subunit.</title>
        <authorList>
            <person name="Musacchio A."/>
            <person name="Cantley L.C."/>
            <person name="Harrison S.C."/>
        </authorList>
    </citation>
    <scope>X-RAY CRYSTALLOGRAPHY (2.0 ANGSTROMS) OF 115-298</scope>
</reference>
<reference key="65">
    <citation type="journal article" date="2001" name="Acta Crystallogr. D">
        <title>NMR trial models: experiences with the colicin immunity protein Im7 and the p85alpha C-terminal SH2-peptide complex.</title>
        <authorList>
            <person name="Pauptit R.A."/>
            <person name="Dennis C.A."/>
            <person name="Derbyshire D.J."/>
            <person name="Breeze A.L."/>
            <person name="Weston S.A."/>
            <person name="Rowsell S."/>
            <person name="Murshudov G.N."/>
        </authorList>
    </citation>
    <scope>X-RAY CRYSTALLOGRAPHY (1.79 ANGSTROMS) OF 617-724 IN COMPLEX WITH PDGFRB</scope>
</reference>
<reference key="66">
    <citation type="journal article" date="1993" name="Cell">
        <title>Structure of the PI3K SH3 domain and analysis of the SH3 family.</title>
        <authorList>
            <person name="Koyama S."/>
            <person name="Yu H."/>
            <person name="Dalgarno D.C."/>
            <person name="Shin T.B."/>
            <person name="Zydowsky L.D."/>
            <person name="Schreiber S.L."/>
        </authorList>
    </citation>
    <scope>STRUCTURE BY NMR OF 1-79</scope>
</reference>
<reference key="67">
    <citation type="journal article" date="1996" name="Biochemistry">
        <title>Structural and thermodynamic characterization of the interaction of the SH3 domain from Fyn with the proline-rich binding site on the p85 subunit of PI3-kinase.</title>
        <authorList>
            <person name="Renzoni D.A."/>
            <person name="Pugh D.J."/>
            <person name="Siligardi G."/>
            <person name="Das P."/>
            <person name="Morton C.J."/>
            <person name="Rossi C."/>
            <person name="Waterfield M.D."/>
            <person name="Campbell I.D."/>
            <person name="Ladbury J.E."/>
        </authorList>
    </citation>
    <scope>STRUCTURE BY NMR OF 91-104</scope>
</reference>
<reference key="68">
    <citation type="journal article" date="1996" name="EMBO J.">
        <title>Structure of a specific peptide complex of the carboxy-terminal SH2 domain from the p85 alpha subunit of phosphatidylinositol 3-kinase.</title>
        <authorList>
            <person name="Breeze A.L."/>
            <person name="Kara B.V."/>
            <person name="Barratt D.G."/>
            <person name="Anderson M."/>
            <person name="Smith J.C."/>
            <person name="Luke R.W."/>
            <person name="Best J.R."/>
            <person name="Cartlidge S.A."/>
        </authorList>
    </citation>
    <scope>STRUCTURE BY NMR OF 617-724</scope>
</reference>
<reference key="69">
    <citation type="journal article" date="2007" name="Science">
        <title>Mechanism of two classes of cancer mutations in the phosphoinositide 3-kinase catalytic subunit.</title>
        <authorList>
            <person name="Miled N."/>
            <person name="Yan Y."/>
            <person name="Hon W.C."/>
            <person name="Perisic O."/>
            <person name="Zvelebil M."/>
            <person name="Inbar Y."/>
            <person name="Schneidman-Duhovny D."/>
            <person name="Wolfson H.J."/>
            <person name="Backer J.M."/>
            <person name="Williams R.L."/>
        </authorList>
    </citation>
    <scope>X-RAY CRYSTALLOGRAPHY (2.40 ANGSTROMS) OF 431-600</scope>
    <scope>FUNCTION</scope>
</reference>
<reference key="70">
    <citation type="journal article" date="2007" name="Science">
        <title>The structure of a human p110alpha/p85alpha complex elucidates the effects of oncogenic PI3Kalpha mutations.</title>
        <authorList>
            <person name="Huang C.-H."/>
            <person name="Mandelker D."/>
            <person name="Schmidt-Kittler O."/>
            <person name="Samuels Y."/>
            <person name="Velculescu V.E."/>
            <person name="Kinzler K.W."/>
            <person name="Vogelstein B."/>
            <person name="Gabelli S.B."/>
            <person name="Amzel L.M."/>
        </authorList>
    </citation>
    <scope>X-RAY CRYSTALLOGRAPHY (3.05 ANGSTROMS) OF 322-600</scope>
</reference>
<reference key="71">
    <citation type="journal article" date="2009" name="Proc. Natl. Acad. Sci. U.S.A.">
        <title>A frequent kinase domain mutation that changes the interaction between PI3Kalpha and the membrane.</title>
        <authorList>
            <person name="Mandelker D."/>
            <person name="Gabelli S.B."/>
            <person name="Schmidt-Kittler O."/>
            <person name="Zhu J."/>
            <person name="Cheong I."/>
            <person name="Huang C.H."/>
            <person name="Kinzler K.W."/>
            <person name="Vogelstein B."/>
            <person name="Amzel L.M."/>
        </authorList>
    </citation>
    <scope>X-RAY CRYSTALLOGRAPHY (2.80 ANGSTROMS) OF 322-694</scope>
    <scope>FUNCTION</scope>
    <scope>SUBUNIT</scope>
</reference>
<reference key="72">
    <citation type="journal article" date="2010" name="Biol. Chem.">
        <title>Structural studies of the phosphatidylinositol 3-kinase (PI3K) SH3 domain in complex with a peptide ligand: role of the anchor residue in ligand binding.</title>
        <authorList>
            <person name="Batra-Safferling R."/>
            <person name="Granzin J."/>
            <person name="Modder S."/>
            <person name="Hoffmann S."/>
            <person name="Willbold D."/>
        </authorList>
    </citation>
    <scope>X-RAY CRYSTALLOGRAPHY (1.70 ANGSTROMS) OF 1-83</scope>
</reference>
<reference key="73">
    <citation type="journal article" date="1997" name="Diabetes">
        <title>Identification of a common amino acid polymorphism in the p85alpha regulatory subunit of phosphatidylinositol 3-kinase: effects on glucose disappearance constant, glucose effectiveness, and the insulin sensitivity index.</title>
        <authorList>
            <person name="Hansen T."/>
            <person name="Andersen C.B."/>
            <person name="Echwald S.M."/>
            <person name="Urhammer S.A."/>
            <person name="Clausen J.O."/>
            <person name="Vestergaard H."/>
            <person name="Owens D."/>
            <person name="Hansen L."/>
            <person name="Pedersen O."/>
        </authorList>
    </citation>
    <scope>VARIANT ILE-326</scope>
</reference>
<reference key="74">
    <citation type="journal article" date="2000" name="Diabetologia">
        <title>Natural variants of human p85 alpha phosphoinositide 3-kinase in severe insulin resistance: a novel variant with impaired insulin-stimulated lipid kinase activity.</title>
        <authorList>
            <person name="Baynes K.C.R."/>
            <person name="Beeton C.A."/>
            <person name="Panayotou G."/>
            <person name="Stein R."/>
            <person name="Soos M."/>
            <person name="Hansen T."/>
            <person name="Simpson H."/>
            <person name="O'Rahilly S."/>
            <person name="Shepherd P.R."/>
            <person name="Whitehead J.P."/>
        </authorList>
    </citation>
    <scope>VARIANTS ILE-326 AND GLN-409</scope>
    <scope>CHARACTERIZATION OF VARIANTS ILE-326 AND GLN-409</scope>
</reference>
<reference key="75">
    <citation type="journal article" date="2013" name="Am. J. Hum. Genet.">
        <title>PIK3R1 mutations cause syndromic insulin resistance with lipoatrophy.</title>
        <authorList>
            <person name="Thauvin-Robinet C."/>
            <person name="Auclair M."/>
            <person name="Duplomb L."/>
            <person name="Caron-Debarle M."/>
            <person name="Avila M."/>
            <person name="St-Onge J."/>
            <person name="Le Merrer M."/>
            <person name="Le Luyer B."/>
            <person name="Heron D."/>
            <person name="Mathieu-Dramard M."/>
            <person name="Bitoun P."/>
            <person name="Petit J.M."/>
            <person name="Odent S."/>
            <person name="Amiel J."/>
            <person name="Picot D."/>
            <person name="Carmignac V."/>
            <person name="Thevenon J."/>
            <person name="Callier P."/>
            <person name="Laville M."/>
            <person name="Reznik Y."/>
            <person name="Fagour C."/>
            <person name="Nunes M.L."/>
            <person name="Capeau J."/>
            <person name="Lascols O."/>
            <person name="Huet F."/>
            <person name="Faivre L."/>
            <person name="Vigouroux C."/>
            <person name="Riviere J.B."/>
        </authorList>
    </citation>
    <scope>VARIANTS SHORTS LYS-489 AND ILE-539 DEL</scope>
</reference>
<reference key="76">
    <citation type="journal article" date="2013" name="Am. J. Hum. Genet.">
        <title>SHORT syndrome with partial lipodystrophy due to impaired phosphatidylinositol 3 kinase signaling.</title>
        <authorList>
            <person name="Chudasama K.K."/>
            <person name="Winnay J."/>
            <person name="Johansson S."/>
            <person name="Claudi T."/>
            <person name="Konig R."/>
            <person name="Haldorsen I."/>
            <person name="Johansson B."/>
            <person name="Woo J.R."/>
            <person name="Aarskog D."/>
            <person name="Sagen J.V."/>
            <person name="Kahn C.R."/>
            <person name="Molven A."/>
            <person name="Njolstad P.R."/>
        </authorList>
    </citation>
    <scope>VARIANT SHORTS TRP-649</scope>
</reference>
<name>P85A_HUMAN</name>
<protein>
    <recommendedName>
        <fullName>Phosphatidylinositol 3-kinase regulatory subunit alpha</fullName>
        <shortName>PI3-kinase regulatory subunit alpha</shortName>
        <shortName>PI3K regulatory subunit alpha</shortName>
        <shortName>PtdIns-3-kinase regulatory subunit alpha</shortName>
    </recommendedName>
    <alternativeName>
        <fullName>Phosphatidylinositol 3-kinase 85 kDa regulatory subunit alpha</fullName>
        <shortName>PI3-kinase subunit p85-alpha</shortName>
        <shortName>PtdIns-3-kinase regulatory subunit p85-alpha</shortName>
    </alternativeName>
</protein>